<feature type="signal peptide" evidence="32">
    <location>
        <begin position="1"/>
        <end position="29"/>
    </location>
</feature>
<feature type="chain" id="PRO_0000033762" description="Latency-associated peptide" evidence="42 44 45 46">
    <location>
        <begin position="30"/>
        <end position="278"/>
    </location>
</feature>
<feature type="chain" id="PRO_0000033763" description="Transforming growth factor beta-1" evidence="42 44 45 46">
    <location>
        <begin position="279"/>
        <end position="390"/>
    </location>
</feature>
<feature type="region of interest" description="Straightjacket domain" evidence="2">
    <location>
        <begin position="30"/>
        <end position="74"/>
    </location>
</feature>
<feature type="region of interest" description="Arm domain" evidence="2">
    <location>
        <begin position="75"/>
        <end position="271"/>
    </location>
</feature>
<feature type="region of interest" description="Bowtie tail" evidence="28">
    <location>
        <begin position="226"/>
        <end position="252"/>
    </location>
</feature>
<feature type="short sequence motif" description="Cell attachment site" evidence="28">
    <location>
        <begin position="244"/>
        <end position="246"/>
    </location>
</feature>
<feature type="site" description="Cleavage; by FURIN" evidence="34">
    <location>
        <begin position="278"/>
        <end position="279"/>
    </location>
</feature>
<feature type="glycosylation site" description="N-linked (GlcNAc...) asparagine" evidence="11 12 28 50">
    <location>
        <position position="82"/>
    </location>
</feature>
<feature type="glycosylation site" description="N-linked (GlcNAc...) asparagine" evidence="3">
    <location>
        <position position="136"/>
    </location>
</feature>
<feature type="glycosylation site" description="N-linked (GlcNAc...) asparagine" evidence="3">
    <location>
        <position position="176"/>
    </location>
</feature>
<feature type="disulfide bond" description="Interchain (with C-1359 or C-1384 in LTBP1); in inactive form" evidence="41">
    <location>
        <position position="33"/>
    </location>
</feature>
<feature type="disulfide bond" description="Interchain (with C-225)" evidence="28 29 50 51">
    <location>
        <position position="223"/>
    </location>
</feature>
<feature type="disulfide bond" description="Interchain (with C-223)" evidence="28 29 50 51">
    <location>
        <position position="225"/>
    </location>
</feature>
<feature type="disulfide bond" evidence="18 23 28 29 48 49 50 51">
    <location>
        <begin position="285"/>
        <end position="294"/>
    </location>
</feature>
<feature type="disulfide bond" evidence="18 23 28 29 48 49 50 51">
    <location>
        <begin position="293"/>
        <end position="356"/>
    </location>
</feature>
<feature type="disulfide bond" evidence="18 23 28 29 48 49 50 51">
    <location>
        <begin position="322"/>
        <end position="387"/>
    </location>
</feature>
<feature type="disulfide bond" evidence="18 23 28 29 48 49 50 51">
    <location>
        <begin position="326"/>
        <end position="389"/>
    </location>
</feature>
<feature type="disulfide bond" description="Interchain" evidence="18 23 28 48 49 50">
    <location>
        <position position="355"/>
    </location>
</feature>
<feature type="sequence variant" id="VAR_016171" description="Associated with lower bone mineral density and higher frequency of vertebral fractures in Japanese post-menopausal women; dbSNP:rs1800470." evidence="7 33 37">
    <original>P</original>
    <variation>L</variation>
    <location>
        <position position="10"/>
    </location>
</feature>
<feature type="sequence variant" id="VAR_016172" description="In dbSNP:rs1800471." evidence="33">
    <original>R</original>
    <variation>P</variation>
    <location>
        <position position="25"/>
    </location>
</feature>
<feature type="sequence variant" id="VAR_081584" description="In IBDIMDE; decreased TGFB1-mediated activation of SMAD signaling; reduced levels of secreted TGFB1; dbSNP:rs1555755308." evidence="30">
    <original>R</original>
    <variation>C</variation>
    <location>
        <position position="45"/>
    </location>
</feature>
<feature type="sequence variant" id="VAR_017607" description="In CAEND; leads to TGF-beta-1 intracellular accumulation; dbSNP:rs111033611." evidence="5 8">
    <original>Y</original>
    <variation>H</variation>
    <location>
        <position position="81"/>
    </location>
</feature>
<feature type="sequence variant" id="VAR_081585" description="In IBDIMDE; decreased TGFB1-mediated activation of SMAD signaling; reduced levels of secreted TGFB1; dbSNP:rs1555755242." evidence="30">
    <original>R</original>
    <variation>C</variation>
    <location>
        <position position="110"/>
    </location>
</feature>
<feature type="sequence variant" id="VAR_017608" description="In CAEND; higher levels of active TGF-beta-1 in the culture medium; enhances osteoclast formation in vitro; dbSNP:rs104894721." evidence="4 5 8 9">
    <original>R</original>
    <variation>C</variation>
    <location>
        <position position="218"/>
    </location>
</feature>
<feature type="sequence variant" id="VAR_017609" description="In CAEND; dbSNP:rs104894720." evidence="4">
    <original>R</original>
    <variation>H</variation>
    <location>
        <position position="218"/>
    </location>
</feature>
<feature type="sequence variant" id="VAR_017610" description="In CAEND; sporadic case; higher levels of active TGF-beta-1 in the culture medium; dbSNP:rs281865485." evidence="8">
    <original>H</original>
    <variation>D</variation>
    <location>
        <position position="222"/>
    </location>
</feature>
<feature type="sequence variant" id="VAR_067303" description="In CAEND; dbSNP:rs104894722." evidence="10">
    <original>C</original>
    <variation>G</variation>
    <location>
        <position position="223"/>
    </location>
</feature>
<feature type="sequence variant" id="VAR_067304" description="In CAEND; dbSNP:rs104894722." evidence="10">
    <original>C</original>
    <variation>R</variation>
    <location>
        <position position="223"/>
    </location>
</feature>
<feature type="sequence variant" id="VAR_017611" description="In CAEND; higher levels of active TGF-beta-1 in the culture medium; dbSNP:rs104894719." evidence="4 5 8">
    <original>C</original>
    <variation>R</variation>
    <location>
        <position position="225"/>
    </location>
</feature>
<feature type="sequence variant" id="VAR_016173" description="In dbSNP:rs1800472.">
    <original>T</original>
    <variation>I</variation>
    <location>
        <position position="263"/>
    </location>
</feature>
<feature type="sequence variant" id="VAR_081586" description="In IBDIMDE; loss of TGFB1-mediated activation of SMAD signaling; mutant TGFB1 is not secreted; dbSNP:rs1336387628." evidence="30">
    <original>C</original>
    <variation>R</variation>
    <location>
        <position position="387"/>
    </location>
</feature>
<feature type="mutagenesis site" description="Abolishes interchain disulfide bond with LTBP1 and/or LRRC32, and subsequent regulation of activation of TGF-beta-1." evidence="21 35">
    <original>C</original>
    <variation>S</variation>
    <location>
        <position position="33"/>
    </location>
</feature>
<feature type="mutagenesis site" description="Does not affect integrin-binding or activation of TGF-beta-1." evidence="28">
    <original>E</original>
    <variation>A</variation>
    <location>
        <position position="75"/>
    </location>
</feature>
<feature type="mutagenesis site" description="Does not affect integrin-binding or activation of TGF-beta-1." evidence="28">
    <original>L</original>
    <variation>A</variation>
    <location>
        <position position="158"/>
    </location>
</feature>
<feature type="mutagenesis site" description="Does not affect integrin-binding or activation of TGF-beta-1." evidence="28">
    <original>L</original>
    <variation>A</variation>
    <variation>R</variation>
    <location>
        <position position="160"/>
    </location>
</feature>
<feature type="mutagenesis site" description="Does not affect integrin-binding or activation of TGF-beta-1." evidence="28">
    <original>P</original>
    <variation>A</variation>
    <variation>R</variation>
    <location>
        <position position="193"/>
    </location>
</feature>
<feature type="mutagenesis site" description="Strongly inhibits integrin-binding and activation of TGF-beta-1." evidence="28">
    <original>LQVDI</original>
    <variation>GQGDG</variation>
    <location>
        <begin position="232"/>
        <end position="236"/>
    </location>
</feature>
<feature type="mutagenesis site" description="Strongly inhibits integrin-binding and activation of TGF-beta-1." evidence="28">
    <original>VDI</original>
    <variation>GDG</variation>
    <location>
        <begin position="234"/>
        <end position="236"/>
    </location>
</feature>
<feature type="mutagenesis site" description="Does not affect integrin-binding or activation of TGF-beta-1." evidence="28">
    <original>N</original>
    <variation>A</variation>
    <location>
        <position position="237"/>
    </location>
</feature>
<feature type="mutagenesis site" description="Does not affect integrin-binding or activation of TGF-beta-1." evidence="28">
    <original>N</original>
    <variation>A</variation>
    <location>
        <position position="254"/>
    </location>
</feature>
<feature type="mutagenesis site" description="Strongly inhibits integrin-binding and activation of TGF-beta-1." evidence="28">
    <original>FLLL</original>
    <variation>GLLG</variation>
    <location>
        <begin position="257"/>
        <end position="260"/>
    </location>
</feature>
<feature type="mutagenesis site" description="Prevents cleavage and subsequent maturation of the protein. Generated in order to mimic the structure of the Transforming growth factor beta-1 proprotein." evidence="29">
    <original>R</original>
    <variation>A</variation>
    <location>
        <position position="278"/>
    </location>
</feature>
<feature type="sequence conflict" description="In Ref. 2; CAA26580." evidence="40" ref="2">
    <original>R</original>
    <variation>RR</variation>
    <location>
        <position position="159"/>
    </location>
</feature>
<feature type="helix" evidence="57">
    <location>
        <begin position="38"/>
        <end position="56"/>
    </location>
</feature>
<feature type="strand" evidence="58">
    <location>
        <begin position="70"/>
        <end position="72"/>
    </location>
</feature>
<feature type="helix" evidence="57">
    <location>
        <begin position="75"/>
        <end position="85"/>
    </location>
</feature>
<feature type="strand" evidence="57">
    <location>
        <begin position="106"/>
        <end position="112"/>
    </location>
</feature>
<feature type="helix" evidence="58">
    <location>
        <begin position="116"/>
        <end position="119"/>
    </location>
</feature>
<feature type="turn" evidence="57">
    <location>
        <begin position="120"/>
        <end position="122"/>
    </location>
</feature>
<feature type="turn" evidence="55">
    <location>
        <begin position="123"/>
        <end position="126"/>
    </location>
</feature>
<feature type="strand" evidence="57">
    <location>
        <begin position="131"/>
        <end position="136"/>
    </location>
</feature>
<feature type="helix" evidence="57">
    <location>
        <begin position="137"/>
        <end position="143"/>
    </location>
</feature>
<feature type="strand" evidence="57">
    <location>
        <begin position="144"/>
        <end position="146"/>
    </location>
</feature>
<feature type="helix" evidence="57">
    <location>
        <begin position="147"/>
        <end position="149"/>
    </location>
</feature>
<feature type="strand" evidence="57">
    <location>
        <begin position="150"/>
        <end position="157"/>
    </location>
</feature>
<feature type="strand" evidence="57">
    <location>
        <begin position="166"/>
        <end position="170"/>
    </location>
</feature>
<feature type="strand" evidence="57">
    <location>
        <begin position="175"/>
        <end position="177"/>
    </location>
</feature>
<feature type="strand" evidence="57">
    <location>
        <begin position="179"/>
        <end position="181"/>
    </location>
</feature>
<feature type="strand" evidence="57">
    <location>
        <begin position="184"/>
        <end position="187"/>
    </location>
</feature>
<feature type="strand" evidence="57">
    <location>
        <begin position="196"/>
        <end position="199"/>
    </location>
</feature>
<feature type="helix" evidence="57">
    <location>
        <begin position="201"/>
        <end position="207"/>
    </location>
</feature>
<feature type="strand" evidence="57">
    <location>
        <begin position="214"/>
        <end position="221"/>
    </location>
</feature>
<feature type="strand" evidence="57">
    <location>
        <begin position="224"/>
        <end position="230"/>
    </location>
</feature>
<feature type="strand" evidence="57">
    <location>
        <begin position="232"/>
        <end position="235"/>
    </location>
</feature>
<feature type="strand" evidence="54">
    <location>
        <begin position="242"/>
        <end position="244"/>
    </location>
</feature>
<feature type="strand" evidence="56">
    <location>
        <begin position="245"/>
        <end position="248"/>
    </location>
</feature>
<feature type="strand" evidence="55">
    <location>
        <begin position="251"/>
        <end position="254"/>
    </location>
</feature>
<feature type="strand" evidence="57">
    <location>
        <begin position="257"/>
        <end position="262"/>
    </location>
</feature>
<feature type="helix" evidence="55">
    <location>
        <begin position="265"/>
        <end position="268"/>
    </location>
</feature>
<feature type="turn" evidence="52">
    <location>
        <begin position="282"/>
        <end position="284"/>
    </location>
</feature>
<feature type="helix" evidence="55">
    <location>
        <begin position="285"/>
        <end position="288"/>
    </location>
</feature>
<feature type="strand" evidence="57">
    <location>
        <begin position="294"/>
        <end position="296"/>
    </location>
</feature>
<feature type="strand" evidence="57">
    <location>
        <begin position="299"/>
        <end position="301"/>
    </location>
</feature>
<feature type="helix" evidence="57">
    <location>
        <begin position="302"/>
        <end position="306"/>
    </location>
</feature>
<feature type="strand" evidence="55">
    <location>
        <begin position="311"/>
        <end position="313"/>
    </location>
</feature>
<feature type="strand" evidence="57">
    <location>
        <begin position="315"/>
        <end position="318"/>
    </location>
</feature>
<feature type="strand" evidence="57">
    <location>
        <begin position="321"/>
        <end position="323"/>
    </location>
</feature>
<feature type="strand" evidence="53">
    <location>
        <begin position="330"/>
        <end position="332"/>
    </location>
</feature>
<feature type="turn" evidence="58">
    <location>
        <begin position="337"/>
        <end position="341"/>
    </location>
</feature>
<feature type="turn" evidence="57">
    <location>
        <begin position="344"/>
        <end position="346"/>
    </location>
</feature>
<feature type="strand" evidence="53">
    <location>
        <begin position="347"/>
        <end position="349"/>
    </location>
</feature>
<feature type="strand" evidence="54">
    <location>
        <begin position="350"/>
        <end position="353"/>
    </location>
</feature>
<feature type="strand" evidence="57">
    <location>
        <begin position="355"/>
        <end position="370"/>
    </location>
</feature>
<feature type="strand" evidence="57">
    <location>
        <begin position="373"/>
        <end position="390"/>
    </location>
</feature>
<reference key="1">
    <citation type="journal article" date="1987" name="Nucleic Acids Res.">
        <title>Intron-exon structure of the human transforming growth factor-beta precursor gene.</title>
        <authorList>
            <person name="Derynck R."/>
            <person name="Rhee L."/>
            <person name="Chen E.Y."/>
            <person name="van Tilburg A."/>
        </authorList>
    </citation>
    <scope>NUCLEOTIDE SEQUENCE [GENOMIC DNA]</scope>
</reference>
<reference key="2">
    <citation type="journal article" date="1985" name="Nature">
        <title>Human transforming growth factor-beta complementary DNA sequence and expression in normal and transformed cells.</title>
        <authorList>
            <person name="Derynck R."/>
            <person name="Jarrett J.A."/>
            <person name="Chen E.Y."/>
            <person name="Eaton D.H."/>
            <person name="Bell J.R."/>
            <person name="Assoian R.K."/>
            <person name="Roberts A.B."/>
            <person name="Sporn M.B."/>
            <person name="Goeddel D.V."/>
        </authorList>
    </citation>
    <scope>NUCLEOTIDE SEQUENCE [MRNA]</scope>
    <scope>VARIANTS LEU-10 AND PRO-25</scope>
</reference>
<reference key="3">
    <citation type="submission" date="2003-05" db="EMBL/GenBank/DDBJ databases">
        <title>Cloning of human full-length CDSs in BD Creator(TM) system donor vector.</title>
        <authorList>
            <person name="Kalnine N."/>
            <person name="Chen X."/>
            <person name="Rolfs A."/>
            <person name="Halleck A."/>
            <person name="Hines L."/>
            <person name="Eisenstein S."/>
            <person name="Koundinya M."/>
            <person name="Raphael J."/>
            <person name="Moreira D."/>
            <person name="Kelley T."/>
            <person name="LaBaer J."/>
            <person name="Lin Y."/>
            <person name="Phelan M."/>
            <person name="Farmer A."/>
        </authorList>
    </citation>
    <scope>NUCLEOTIDE SEQUENCE [LARGE SCALE MRNA]</scope>
</reference>
<reference key="4">
    <citation type="journal article" date="2004" name="Nat. Genet.">
        <title>Complete sequencing and characterization of 21,243 full-length human cDNAs.</title>
        <authorList>
            <person name="Ota T."/>
            <person name="Suzuki Y."/>
            <person name="Nishikawa T."/>
            <person name="Otsuki T."/>
            <person name="Sugiyama T."/>
            <person name="Irie R."/>
            <person name="Wakamatsu A."/>
            <person name="Hayashi K."/>
            <person name="Sato H."/>
            <person name="Nagai K."/>
            <person name="Kimura K."/>
            <person name="Makita H."/>
            <person name="Sekine M."/>
            <person name="Obayashi M."/>
            <person name="Nishi T."/>
            <person name="Shibahara T."/>
            <person name="Tanaka T."/>
            <person name="Ishii S."/>
            <person name="Yamamoto J."/>
            <person name="Saito K."/>
            <person name="Kawai Y."/>
            <person name="Isono Y."/>
            <person name="Nakamura Y."/>
            <person name="Nagahari K."/>
            <person name="Murakami K."/>
            <person name="Yasuda T."/>
            <person name="Iwayanagi T."/>
            <person name="Wagatsuma M."/>
            <person name="Shiratori A."/>
            <person name="Sudo H."/>
            <person name="Hosoiri T."/>
            <person name="Kaku Y."/>
            <person name="Kodaira H."/>
            <person name="Kondo H."/>
            <person name="Sugawara M."/>
            <person name="Takahashi M."/>
            <person name="Kanda K."/>
            <person name="Yokoi T."/>
            <person name="Furuya T."/>
            <person name="Kikkawa E."/>
            <person name="Omura Y."/>
            <person name="Abe K."/>
            <person name="Kamihara K."/>
            <person name="Katsuta N."/>
            <person name="Sato K."/>
            <person name="Tanikawa M."/>
            <person name="Yamazaki M."/>
            <person name="Ninomiya K."/>
            <person name="Ishibashi T."/>
            <person name="Yamashita H."/>
            <person name="Murakawa K."/>
            <person name="Fujimori K."/>
            <person name="Tanai H."/>
            <person name="Kimata M."/>
            <person name="Watanabe M."/>
            <person name="Hiraoka S."/>
            <person name="Chiba Y."/>
            <person name="Ishida S."/>
            <person name="Ono Y."/>
            <person name="Takiguchi S."/>
            <person name="Watanabe S."/>
            <person name="Yosida M."/>
            <person name="Hotuta T."/>
            <person name="Kusano J."/>
            <person name="Kanehori K."/>
            <person name="Takahashi-Fujii A."/>
            <person name="Hara H."/>
            <person name="Tanase T.-O."/>
            <person name="Nomura Y."/>
            <person name="Togiya S."/>
            <person name="Komai F."/>
            <person name="Hara R."/>
            <person name="Takeuchi K."/>
            <person name="Arita M."/>
            <person name="Imose N."/>
            <person name="Musashino K."/>
            <person name="Yuuki H."/>
            <person name="Oshima A."/>
            <person name="Sasaki N."/>
            <person name="Aotsuka S."/>
            <person name="Yoshikawa Y."/>
            <person name="Matsunawa H."/>
            <person name="Ichihara T."/>
            <person name="Shiohata N."/>
            <person name="Sano S."/>
            <person name="Moriya S."/>
            <person name="Momiyama H."/>
            <person name="Satoh N."/>
            <person name="Takami S."/>
            <person name="Terashima Y."/>
            <person name="Suzuki O."/>
            <person name="Nakagawa S."/>
            <person name="Senoh A."/>
            <person name="Mizoguchi H."/>
            <person name="Goto Y."/>
            <person name="Shimizu F."/>
            <person name="Wakebe H."/>
            <person name="Hishigaki H."/>
            <person name="Watanabe T."/>
            <person name="Sugiyama A."/>
            <person name="Takemoto M."/>
            <person name="Kawakami B."/>
            <person name="Yamazaki M."/>
            <person name="Watanabe K."/>
            <person name="Kumagai A."/>
            <person name="Itakura S."/>
            <person name="Fukuzumi Y."/>
            <person name="Fujimori Y."/>
            <person name="Komiyama M."/>
            <person name="Tashiro H."/>
            <person name="Tanigami A."/>
            <person name="Fujiwara T."/>
            <person name="Ono T."/>
            <person name="Yamada K."/>
            <person name="Fujii Y."/>
            <person name="Ozaki K."/>
            <person name="Hirao M."/>
            <person name="Ohmori Y."/>
            <person name="Kawabata A."/>
            <person name="Hikiji T."/>
            <person name="Kobatake N."/>
            <person name="Inagaki H."/>
            <person name="Ikema Y."/>
            <person name="Okamoto S."/>
            <person name="Okitani R."/>
            <person name="Kawakami T."/>
            <person name="Noguchi S."/>
            <person name="Itoh T."/>
            <person name="Shigeta K."/>
            <person name="Senba T."/>
            <person name="Matsumura K."/>
            <person name="Nakajima Y."/>
            <person name="Mizuno T."/>
            <person name="Morinaga M."/>
            <person name="Sasaki M."/>
            <person name="Togashi T."/>
            <person name="Oyama M."/>
            <person name="Hata H."/>
            <person name="Watanabe M."/>
            <person name="Komatsu T."/>
            <person name="Mizushima-Sugano J."/>
            <person name="Satoh T."/>
            <person name="Shirai Y."/>
            <person name="Takahashi Y."/>
            <person name="Nakagawa K."/>
            <person name="Okumura K."/>
            <person name="Nagase T."/>
            <person name="Nomura N."/>
            <person name="Kikuchi H."/>
            <person name="Masuho Y."/>
            <person name="Yamashita R."/>
            <person name="Nakai K."/>
            <person name="Yada T."/>
            <person name="Nakamura Y."/>
            <person name="Ohara O."/>
            <person name="Isogai T."/>
            <person name="Sugano S."/>
        </authorList>
    </citation>
    <scope>NUCLEOTIDE SEQUENCE [LARGE SCALE MRNA]</scope>
</reference>
<reference key="5">
    <citation type="submission" date="2005-07" db="EMBL/GenBank/DDBJ databases">
        <authorList>
            <person name="Mural R.J."/>
            <person name="Istrail S."/>
            <person name="Sutton G.G."/>
            <person name="Florea L."/>
            <person name="Halpern A.L."/>
            <person name="Mobarry C.M."/>
            <person name="Lippert R."/>
            <person name="Walenz B."/>
            <person name="Shatkay H."/>
            <person name="Dew I."/>
            <person name="Miller J.R."/>
            <person name="Flanigan M.J."/>
            <person name="Edwards N.J."/>
            <person name="Bolanos R."/>
            <person name="Fasulo D."/>
            <person name="Halldorsson B.V."/>
            <person name="Hannenhalli S."/>
            <person name="Turner R."/>
            <person name="Yooseph S."/>
            <person name="Lu F."/>
            <person name="Nusskern D.R."/>
            <person name="Shue B.C."/>
            <person name="Zheng X.H."/>
            <person name="Zhong F."/>
            <person name="Delcher A.L."/>
            <person name="Huson D.H."/>
            <person name="Kravitz S.A."/>
            <person name="Mouchard L."/>
            <person name="Reinert K."/>
            <person name="Remington K.A."/>
            <person name="Clark A.G."/>
            <person name="Waterman M.S."/>
            <person name="Eichler E.E."/>
            <person name="Adams M.D."/>
            <person name="Hunkapiller M.W."/>
            <person name="Myers E.W."/>
            <person name="Venter J.C."/>
        </authorList>
    </citation>
    <scope>NUCLEOTIDE SEQUENCE [LARGE SCALE GENOMIC DNA]</scope>
</reference>
<reference key="6">
    <citation type="journal article" date="2004" name="Genome Res.">
        <title>The status, quality, and expansion of the NIH full-length cDNA project: the Mammalian Gene Collection (MGC).</title>
        <authorList>
            <consortium name="The MGC Project Team"/>
        </authorList>
    </citation>
    <scope>NUCLEOTIDE SEQUENCE [LARGE SCALE MRNA]</scope>
    <source>
        <tissue>Duodenum</tissue>
        <tissue>Eye</tissue>
    </source>
</reference>
<reference key="7">
    <citation type="journal article" date="1987" name="Tumor Res.">
        <title>Cloning and expression of the gene for human transforming growth factor-beta in Escherichia coli.</title>
        <authorList>
            <person name="Urushizaki Y."/>
            <person name="Niitsu Y."/>
            <person name="Terui T."/>
            <person name="Koshida Y."/>
            <person name="Mahara K."/>
            <person name="Kohgo Y."/>
            <person name="Urushizaki I."/>
            <person name="Takahashi Y."/>
            <person name="Ito H."/>
        </authorList>
    </citation>
    <scope>NUCLEOTIDE SEQUENCE [MRNA] OF 279-390</scope>
    <source>
        <tissue>Carcinoma</tissue>
    </source>
</reference>
<reference key="8">
    <citation type="journal article" date="1993" name="Protein Expr. Purif.">
        <title>Recombinant human transforming growth factor-beta 1: expression by Chinese hamster ovary cells, isolation, and characterization.</title>
        <authorList>
            <person name="Bourdrel L."/>
            <person name="Lin C.-H."/>
            <person name="Lauren S.L."/>
            <person name="Elmore R.H."/>
            <person name="Sugarman B.J."/>
            <person name="Hu S."/>
            <person name="Westcott K.R."/>
        </authorList>
    </citation>
    <scope>PROTEIN SEQUENCE OF 279-329</scope>
    <source>
        <tissue>Urinary bladder carcinoma</tissue>
    </source>
</reference>
<reference key="9">
    <citation type="journal article" date="1985" name="J. Biol. Chem.">
        <title>Cellular receptors for type beta transforming growth factor. Ligand binding and affinity labeling in human and rodent cell lines.</title>
        <authorList>
            <person name="Massague J."/>
            <person name="Like B."/>
        </authorList>
    </citation>
    <scope>PROTEIN SEQUENCE OF 279-301</scope>
</reference>
<reference key="10">
    <citation type="journal article" date="1988" name="J. Biol. Chem.">
        <title>Latent high molecular weight complex of transforming growth factor beta 1. Purification from human platelets and structural characterization.</title>
        <authorList>
            <person name="Miyazono K."/>
            <person name="Hellman U."/>
            <person name="Wernstedt C."/>
            <person name="Heldin C.H."/>
        </authorList>
    </citation>
    <scope>PROTEIN SEQUENCE OF 30-42 AND 279-290</scope>
    <scope>GLYCOSYLATION</scope>
</reference>
<reference key="11">
    <citation type="journal article" date="1995" name="J. Biol. Chem.">
        <title>Processing of transforming growth factor beta 1 precursor by human furin convertase.</title>
        <authorList>
            <person name="Dubois C.M."/>
            <person name="Laprise M.H."/>
            <person name="Blanchette F."/>
            <person name="Gentry L.E."/>
            <person name="Leduc R."/>
        </authorList>
    </citation>
    <scope>PROTEIN SEQUENCE OF 279-283</scope>
    <scope>PROTEOLYTIC CLEAVAGE</scope>
</reference>
<reference key="12">
    <citation type="journal article" date="1989" name="Nature">
        <title>Role for carbohydrate structures in TGF-beta 1 latency.</title>
        <authorList>
            <person name="Miyazono K."/>
            <person name="Heldin C.H."/>
        </authorList>
    </citation>
    <scope>GLYCOSYLATION</scope>
</reference>
<reference key="13">
    <citation type="journal article" date="1991" name="EMBO J.">
        <title>A role of the latent TGF-beta 1-binding protein in the assembly and secretion of TGF-beta 1.</title>
        <authorList>
            <person name="Miyazono K."/>
            <person name="Olofsson A."/>
            <person name="Colosetti P."/>
            <person name="Heldin C.H."/>
        </authorList>
    </citation>
    <scope>INTERACTION WITH LTBP1</scope>
</reference>
<reference key="14">
    <citation type="journal article" date="1996" name="EMBO J.">
        <title>Association of the small latent transforming growth factor-beta with an eight cysteine repeat of its binding protein LTBP-1.</title>
        <authorList>
            <person name="Saharinen J."/>
            <person name="Taipale J."/>
            <person name="Keski-Oja J."/>
        </authorList>
    </citation>
    <scope>INTERACTION WITH LTBP1</scope>
    <scope>MUTAGENESIS OF CYS-33</scope>
</reference>
<reference key="15">
    <citation type="journal article" date="1996" name="J. Biol. Chem.">
        <title>Identification and characterization of an eight-cysteine repeat of the latent transforming growth factor-beta binding protein-1 that mediates bonding to the latent transforming growth factor-beta1.</title>
        <authorList>
            <person name="Gleizes P.E."/>
            <person name="Beavis R.C."/>
            <person name="Mazzieri R."/>
            <person name="Shen B."/>
            <person name="Rifkin D.B."/>
        </authorList>
    </citation>
    <scope>INTERACTION WITH LTBP1</scope>
</reference>
<reference key="16">
    <citation type="journal article" date="1997" name="Kidney Int.">
        <title>Latent transforming growth factor-beta: structural features and mechanisms of activation.</title>
        <authorList>
            <person name="Munger J.S."/>
            <person name="Harpel J.G."/>
            <person name="Gleizes P.E."/>
            <person name="Mazzieri R."/>
            <person name="Nunes I."/>
            <person name="Rifkin D.B."/>
        </authorList>
    </citation>
    <scope>REVIEW</scope>
</reference>
<reference key="17">
    <citation type="journal article" date="1999" name="Biochem. J.">
        <title>Dermatopontin interacts with transforming growth factor beta and enhances its biological activity.</title>
        <authorList>
            <person name="Okamoto O."/>
            <person name="Fujiwara S."/>
            <person name="Abe M."/>
            <person name="Sato Y."/>
        </authorList>
    </citation>
    <scope>INTERACTION WITH DPT</scope>
</reference>
<reference key="18">
    <citation type="journal article" date="2001" name="J. Cell. Biochem.">
        <title>Differential gene expression of cultured human osteoblasts.</title>
        <authorList>
            <person name="Shur I."/>
            <person name="Lokiec F."/>
            <person name="Bleiberg I."/>
            <person name="Benayahu D."/>
        </authorList>
    </citation>
    <scope>TISSUE SPECIFICITY</scope>
</reference>
<reference key="19">
    <citation type="journal article" date="2005" name="J. Proteome Res.">
        <title>Human plasma N-glycoproteome analysis by immunoaffinity subtraction, hydrazide chemistry, and mass spectrometry.</title>
        <authorList>
            <person name="Liu T."/>
            <person name="Qian W.-J."/>
            <person name="Gritsenko M.A."/>
            <person name="Camp D.G. II"/>
            <person name="Monroe M.E."/>
            <person name="Moore R.J."/>
            <person name="Smith R.D."/>
        </authorList>
    </citation>
    <scope>GLYCOSYLATION [LARGE SCALE ANALYSIS] AT ASN-82</scope>
    <source>
        <tissue>Plasma</tissue>
    </source>
</reference>
<reference key="20">
    <citation type="journal article" date="2006" name="FASEB J.">
        <title>Identification of CD109 as part of the TGF-beta receptor system in human keratinocytes.</title>
        <authorList>
            <person name="Finnson K.W."/>
            <person name="Tam B.Y.Y."/>
            <person name="Liu K."/>
            <person name="Marcoux A."/>
            <person name="Lepage P."/>
            <person name="Roy S."/>
            <person name="Bizet A.A."/>
            <person name="Philip A."/>
        </authorList>
    </citation>
    <scope>INTERACTION WITH CD109</scope>
</reference>
<reference key="21">
    <citation type="journal article" date="2006" name="Mol. Cell. Proteomics">
        <title>Elucidation of N-glycosylation sites on human platelet proteins: a glycoproteomic approach.</title>
        <authorList>
            <person name="Lewandrowski U."/>
            <person name="Moebius J."/>
            <person name="Walter U."/>
            <person name="Sickmann A."/>
        </authorList>
    </citation>
    <scope>GLYCOSYLATION [LARGE SCALE ANALYSIS] AT ASN-82</scope>
    <source>
        <tissue>Platelet</tissue>
    </source>
</reference>
<reference key="22">
    <citation type="journal article" date="2007" name="J. Biol. Chem.">
        <title>Mechanisms for asporin function and regulation in articular cartilage.</title>
        <authorList>
            <person name="Nakajima M."/>
            <person name="Kizawa H."/>
            <person name="Saitoh M."/>
            <person name="Kou I."/>
            <person name="Miyazono K."/>
            <person name="Ikegawa S."/>
        </authorList>
    </citation>
    <scope>SUBCELLULAR LOCATION</scope>
    <scope>TISSUE SPECIFICITY</scope>
    <scope>INTERACTION WITH ASPN</scope>
</reference>
<reference key="23">
    <citation type="journal article" date="2008" name="J. Biol. Chem.">
        <title>Bone morphogenetic proteins signal through the transforming growth factor-beta type III receptor.</title>
        <authorList>
            <person name="Kirkbride K.C."/>
            <person name="Townsend T.A."/>
            <person name="Bruinsma M.W."/>
            <person name="Barnett J.V."/>
            <person name="Blobe G.C."/>
        </authorList>
    </citation>
    <scope>INTERACTION WITH TGFBR3</scope>
</reference>
<reference key="24">
    <citation type="journal article" date="2009" name="Eur. J. Immunol.">
        <title>Membrane protein GARP is a receptor for latent TGF-beta on the surface of activated human Treg.</title>
        <authorList>
            <person name="Stockis J."/>
            <person name="Colau D."/>
            <person name="Coulie P.G."/>
            <person name="Lucas S."/>
        </authorList>
    </citation>
    <scope>FUNCTION</scope>
    <scope>INTERACTION WITH LRRC32</scope>
</reference>
<reference key="25">
    <citation type="journal article" date="2012" name="Mol. Biol. Cell">
        <title>GARP regulates the bioavailability and activation of TGFbeta.</title>
        <authorList>
            <person name="Wang R."/>
            <person name="Zhu J."/>
            <person name="Dong X."/>
            <person name="Shi M."/>
            <person name="Lu C."/>
            <person name="Springer T.A."/>
        </authorList>
    </citation>
    <scope>FUNCTION</scope>
    <scope>INTERACTION WITH LRRC32</scope>
    <scope>MUTAGENESIS OF CYS-33</scope>
</reference>
<reference key="26">
    <citation type="journal article" date="2009" name="Proc. Natl. Acad. Sci. U.S.A.">
        <title>GARP (LRRC32) is essential for the surface expression of latent TGF-beta on platelets and activated FOXP3+ regulatory T cells.</title>
        <authorList>
            <person name="Tran D.Q."/>
            <person name="Andersson J."/>
            <person name="Wang R."/>
            <person name="Ramsey H."/>
            <person name="Unutmaz D."/>
            <person name="Shevach E.M."/>
        </authorList>
    </citation>
    <scope>FUNCTION</scope>
    <scope>INTERACTION WITH LRRC32</scope>
</reference>
<reference key="27">
    <citation type="journal article" date="2010" name="Biochem. Biophys. Res. Commun.">
        <title>Extracellular heat shock protein HSP90beta secreted by MG63 osteosarcoma cells inhibits activation of latent TGF-beta1.</title>
        <authorList>
            <person name="Suzuki S."/>
            <person name="Kulkarni A.B."/>
        </authorList>
    </citation>
    <scope>INTERACTION WITH HSP90AB1</scope>
</reference>
<reference key="28">
    <citation type="journal article" date="2011" name="BMC Syst. Biol.">
        <title>Initial characterization of the human central proteome.</title>
        <authorList>
            <person name="Burkard T.R."/>
            <person name="Planyavsky M."/>
            <person name="Kaupe I."/>
            <person name="Breitwieser F.P."/>
            <person name="Buerckstuemmer T."/>
            <person name="Bennett K.L."/>
            <person name="Superti-Furga G."/>
            <person name="Colinge J."/>
        </authorList>
    </citation>
    <scope>IDENTIFICATION BY MASS SPECTROMETRY [LARGE SCALE ANALYSIS]</scope>
</reference>
<reference key="29">
    <citation type="journal article" date="2014" name="PLoS ONE">
        <title>Sustained induction of collagen synthesis by TGF-beta requires regulated intramembrane proteolysis of CREB3L1.</title>
        <authorList>
            <person name="Chen Q."/>
            <person name="Lee C.E."/>
            <person name="Denard B."/>
            <person name="Ye J."/>
        </authorList>
    </citation>
    <scope>FUNCTION</scope>
</reference>
<reference key="30">
    <citation type="journal article" date="2015" name="Proteomics">
        <title>N-terminome analysis of the human mitochondrial proteome.</title>
        <authorList>
            <person name="Vaca Jacome A.S."/>
            <person name="Rabilloud T."/>
            <person name="Schaeffer-Reiss C."/>
            <person name="Rompais M."/>
            <person name="Ayoub D."/>
            <person name="Lane L."/>
            <person name="Bairoch A."/>
            <person name="Van Dorsselaer A."/>
            <person name="Carapito C."/>
        </authorList>
    </citation>
    <scope>IDENTIFICATION BY MASS SPECTROMETRY [LARGE SCALE ANALYSIS]</scope>
</reference>
<reference key="31">
    <citation type="journal article" date="2016" name="Matrix Biol.">
        <title>Functional consequence of fibulin-4 missense mutations associated with vascular and skeletal abnormalities and cutis laxa.</title>
        <authorList>
            <person name="Sasaki T."/>
            <person name="Hanisch F.G."/>
            <person name="Deutzmann R."/>
            <person name="Sakai L.Y."/>
            <person name="Sakuma T."/>
            <person name="Miyamoto T."/>
            <person name="Yamamoto T."/>
            <person name="Hannappel E."/>
            <person name="Chu M.L."/>
            <person name="Lanig H."/>
            <person name="von der Mark K."/>
        </authorList>
    </citation>
    <scope>INTERACTION WITH EFEMP2</scope>
</reference>
<reference key="32">
    <citation type="journal article" date="2016" name="Oncogene">
        <title>Syntenin regulates TGF-beta1-induced Smad activation and the epithelial-to-mesenchymal transition by inhibiting caveolin-mediated TGF-beta type I receptor internalization.</title>
        <authorList>
            <person name="Hwangbo C."/>
            <person name="Tae N."/>
            <person name="Lee S."/>
            <person name="Kim O."/>
            <person name="Park O.K."/>
            <person name="Kim J."/>
            <person name="Kwon S.H."/>
            <person name="Lee J.H."/>
        </authorList>
    </citation>
    <scope>FUNCTION</scope>
</reference>
<reference key="33">
    <citation type="journal article" date="2016" name="PLoS ONE">
        <title>PSG9 Stimulates Increase in FoxP3+ Regulatory T-Cells through the TGF-beta1 Pathway.</title>
        <authorList>
            <person name="Jones K."/>
            <person name="Ballesteros A."/>
            <person name="Mentink-Kane M."/>
            <person name="Warren J."/>
            <person name="Rattila S."/>
            <person name="Malech H."/>
            <person name="Kang E."/>
            <person name="Dveksler G."/>
        </authorList>
    </citation>
    <scope>INTERACTION WITH PSG9</scope>
</reference>
<reference key="34">
    <citation type="journal article" date="2016" name="Cold Spring Harb. Perspect. Biol.">
        <title>Regulation of the bioavailability of TGF-beta and TGF-beta-related proteins.</title>
        <authorList>
            <person name="Robertson I.B."/>
            <person name="Rifkin D.B."/>
        </authorList>
    </citation>
    <scope>REVIEW</scope>
</reference>
<reference key="35">
    <citation type="journal article" date="2018" name="Cell">
        <title>A milieu molecule for TGF-beta required for microglia function in the nervous system.</title>
        <authorList>
            <person name="Qin Y."/>
            <person name="Garrison B.S."/>
            <person name="Ma W."/>
            <person name="Wang R."/>
            <person name="Jiang A."/>
            <person name="Li J."/>
            <person name="Mistry M."/>
            <person name="Bronson R.T."/>
            <person name="Santoro D."/>
            <person name="Franco C."/>
            <person name="Robinton D.A."/>
            <person name="Stevens B."/>
            <person name="Rossi D.J."/>
            <person name="Lu C."/>
            <person name="Springer T.A."/>
        </authorList>
    </citation>
    <scope>FUNCTION</scope>
    <scope>INTERACTION WITH NRROS</scope>
</reference>
<reference key="36">
    <citation type="journal article" date="2018" name="Nat. Genet.">
        <title>Human TGF-beta1 deficiency causes severe inflammatory bowel disease and encephalopathy.</title>
        <authorList>
            <person name="Kotlarz D."/>
            <person name="Marquardt B."/>
            <person name="Baroey T."/>
            <person name="Lee W.S."/>
            <person name="Konnikova L."/>
            <person name="Hollizeck S."/>
            <person name="Magg T."/>
            <person name="Lehle A.S."/>
            <person name="Walz C."/>
            <person name="Borggraefe I."/>
            <person name="Hauck F."/>
            <person name="Bufler P."/>
            <person name="Conca R."/>
            <person name="Wall S.M."/>
            <person name="Schumacher E.M."/>
            <person name="Misceo D."/>
            <person name="Frengen E."/>
            <person name="Bentsen B.S."/>
            <person name="Uhlig H.H."/>
            <person name="Hopfner K.P."/>
            <person name="Muise A.M."/>
            <person name="Snapper S.B."/>
            <person name="Stroemme P."/>
            <person name="Klein C."/>
        </authorList>
    </citation>
    <scope>FUNCTION</scope>
    <scope>SUBCELLULAR LOCATION</scope>
    <scope>INVOLVEMENT IN IBDIMDE</scope>
    <scope>VARIANTS IBDIMDE CYS-45; CYS-110 AND ARG-387</scope>
    <scope>CHARACTERIZATION OF VARIANTS IBDIMDE CYS-45; CYS-110 AND ARG-387</scope>
</reference>
<reference key="37">
    <citation type="journal article" date="2019" name="Cell Death Dis.">
        <title>TTC3 contributes to TGF-beta1-induced epithelial-mesenchymal transition and myofibroblast differentiation, potentially through SMURF2 ubiquitylation and degradation.</title>
        <authorList>
            <person name="Kim J.H."/>
            <person name="Ham S."/>
            <person name="Lee Y."/>
            <person name="Suh G.Y."/>
            <person name="Lee Y.S."/>
        </authorList>
    </citation>
    <scope>FUNCTION</scope>
</reference>
<reference key="38">
    <citation type="journal article" date="1993" name="Biochemistry">
        <title>Transforming growth factor beta 1: NMR signal assignments of the recombinant protein expressed and isotopically enriched using Chinese hamster ovary cells.</title>
        <authorList>
            <person name="Archer S.J."/>
            <person name="Bax A."/>
            <person name="Roberts A.B."/>
            <person name="Sporn M.B."/>
            <person name="Ogawa Y."/>
            <person name="Piez K.A."/>
            <person name="Weatherbee J.A."/>
            <person name="Tsang M.L.-S."/>
            <person name="Lucas R."/>
            <person name="Zheng B.-L."/>
            <person name="Wenker J."/>
            <person name="Torchia D.A."/>
        </authorList>
    </citation>
    <scope>STRUCTURE BY NMR OF 279-390</scope>
</reference>
<reference key="39">
    <citation type="journal article" date="1993" name="Biochemistry">
        <title>Transforming growth factor beta 1: secondary structure as determined by heteronuclear magnetic resonance spectroscopy.</title>
        <authorList>
            <person name="Archer S.J."/>
            <person name="Bax A."/>
            <person name="Roberts A.B."/>
            <person name="Sporn M.B."/>
            <person name="Ogawa Y."/>
            <person name="Piez K.A."/>
            <person name="Weatherbee J.A."/>
            <person name="Tsang M.L.-S."/>
            <person name="Lucas R."/>
            <person name="Zheng B.-L."/>
            <person name="Wenker J."/>
            <person name="Torchia D.A."/>
        </authorList>
    </citation>
    <scope>STRUCTURE BY NMR OF 279-390</scope>
</reference>
<reference key="40">
    <citation type="journal article" date="1996" name="Biochemistry">
        <title>Transforming growth factor beta 1: three-dimensional structure in solution and comparison with the X-ray structure of transforming growth factor beta 2.</title>
        <authorList>
            <person name="Hinck A.P."/>
            <person name="Archer S.J."/>
            <person name="Qian S.W."/>
            <person name="Roberts A.B."/>
            <person name="Sporn M.B."/>
            <person name="Weatherbee J.A."/>
            <person name="Tsang M.L.-S."/>
            <person name="Lucas R."/>
            <person name="Zheng B.-L."/>
            <person name="Wenker J."/>
            <person name="Torchia D.A."/>
        </authorList>
    </citation>
    <scope>STRUCTURE BY NMR OF 279-390</scope>
</reference>
<reference evidence="48" key="41">
    <citation type="journal article" date="2010" name="J. Biol. Chem.">
        <title>Ternary complex of transforming growth factor-beta1 reveals isoform-specific ligand recognition and receptor recruitment in the superfamily.</title>
        <authorList>
            <person name="Radaev S."/>
            <person name="Zou Z."/>
            <person name="Huang T."/>
            <person name="Lafer E.M."/>
            <person name="Hinck A.P."/>
            <person name="Sun P.D."/>
        </authorList>
    </citation>
    <scope>X-RAY CRYSTALLOGRAPHY (3.00 ANGSTROMS) OF 279-390 IN COMPLEX WITH TGFBR1 AND TGFBR2</scope>
    <scope>FUNCTION</scope>
    <scope>SUBUNIT</scope>
    <scope>DISULFIDE BONDS</scope>
</reference>
<reference evidence="49" key="42">
    <citation type="journal article" date="2014" name="Protein Sci.">
        <title>Structures of a pan-specific antagonist antibody complexed to different isoforms of TGFbeta reveal structural plasticity of antibody-antigen interactions.</title>
        <authorList>
            <person name="Moulin A."/>
            <person name="Mathieu M."/>
            <person name="Lawrence C."/>
            <person name="Bigelow R."/>
            <person name="Levine M."/>
            <person name="Hamel C."/>
            <person name="Marquette J.P."/>
            <person name="Le Parc J."/>
            <person name="Loux C."/>
            <person name="Ferrari P."/>
            <person name="Capdevila C."/>
            <person name="Dumas J."/>
            <person name="Dumas B."/>
            <person name="Rak A."/>
            <person name="Bird J."/>
            <person name="Qiu H."/>
            <person name="Pan C.Q."/>
            <person name="Edmunds T."/>
            <person name="Wei R.R."/>
        </authorList>
    </citation>
    <scope>X-RAY CRYSTALLOGRAPHY (3.00 ANGSTROMS) OF 279-390</scope>
    <scope>SUBUNIT</scope>
    <scope>DISULFIDE BONDS</scope>
</reference>
<reference evidence="50" key="43">
    <citation type="journal article" date="2017" name="Nature">
        <title>Force interacts with macromolecular structure in activation of TGF-beta.</title>
        <authorList>
            <person name="Dong X."/>
            <person name="Zhao B."/>
            <person name="Iacob R.E."/>
            <person name="Zhu J."/>
            <person name="Koksal A.C."/>
            <person name="Lu C."/>
            <person name="Engen J.R."/>
            <person name="Springer T.A."/>
        </authorList>
    </citation>
    <scope>X-RAY CRYSTALLOGRAPHY (3.49 ANGSTROMS) OF 34-390 IN COMPLEX WITH ITGAV AND ITGB6</scope>
    <scope>FUNCTION</scope>
    <scope>INTERACTION WITH ITGAV AND ITGB6</scope>
    <scope>SUBUNIT</scope>
    <scope>DISULFIDE BOND</scope>
    <scope>GLYCOSYLATION AT ASN-82</scope>
    <scope>MUTAGENESIS OF GLU-75; LEU-158; LEU-160; PRO-193; 232-LEU--ILE-236; 234-VAL--ILE-236; ASN-237; ASN-254 AND 257-PHE--LEU-260</scope>
</reference>
<reference evidence="51" key="44">
    <citation type="journal article" date="2018" name="J. Biol. Chem.">
        <title>Prodomain-growth factor swapping in the structure of pro-TGF-beta1.</title>
        <authorList>
            <person name="Zhao B."/>
            <person name="Xu S."/>
            <person name="Dong X."/>
            <person name="Lu C."/>
            <person name="Springer T.A."/>
        </authorList>
    </citation>
    <scope>X-RAY CRYSTALLOGRAPHY (2.90 ANGSTROMS) OF 30-390</scope>
    <scope>SUBUNIT</scope>
    <scope>DISULFIDE BONDS</scope>
    <scope>MUTAGENESIS OF ARG-278</scope>
</reference>
<reference key="45">
    <citation type="journal article" date="1998" name="J. Bone Miner. Res.">
        <title>Association of a polymorphism of the transforming growth factor-beta1 gene with genetic susceptibility to osteoporosis in postmenopausal Japanese women.</title>
        <authorList>
            <person name="Yamada Y."/>
            <person name="Miyauchi A."/>
            <person name="Goto J."/>
            <person name="Takagi Y."/>
            <person name="Okuizumi H."/>
            <person name="Kanematsu M."/>
            <person name="Hase M."/>
            <person name="Takai H."/>
            <person name="Harada A."/>
            <person name="Ikeda K."/>
        </authorList>
    </citation>
    <scope>VARIANT LEU-10</scope>
</reference>
<reference key="46">
    <citation type="journal article" date="2000" name="Nat. Genet.">
        <title>Domain-specific mutations in TGFB1 result in Camurati-Engelmann disease.</title>
        <authorList>
            <person name="Kinoshita A."/>
            <person name="Saito T."/>
            <person name="Tomita H."/>
            <person name="Makita Y."/>
            <person name="Yoshida K."/>
            <person name="Ghadami M."/>
            <person name="Yamada K."/>
            <person name="Kondo S."/>
            <person name="Ikegawa S."/>
            <person name="Nishimura G."/>
            <person name="Fukushima Y."/>
            <person name="Nakagomi T."/>
            <person name="Saito H."/>
            <person name="Sugimoto T."/>
            <person name="Kamegaya M."/>
            <person name="Hisa K."/>
            <person name="Murray J.C."/>
            <person name="Taniguchi N."/>
            <person name="Niikawa N."/>
            <person name="Yoshiura K."/>
        </authorList>
    </citation>
    <scope>VARIANTS CAEND CYS-218; HIS-218 AND ARG-225</scope>
</reference>
<reference key="47">
    <citation type="journal article" date="2000" name="Nat. Genet.">
        <title>Mutations in the gene encoding the latency-associated peptide of TGF-beta 1 cause Camurati-Engelmann disease.</title>
        <authorList>
            <person name="Janssens K."/>
            <person name="Gershoni-Baruch R."/>
            <person name="Guanabens N."/>
            <person name="Migone N."/>
            <person name="Ralston S."/>
            <person name="Bonduelle M."/>
            <person name="Lissens W."/>
            <person name="Van Maldergem L."/>
            <person name="Vanhoenacker F."/>
            <person name="Verbruggen L."/>
            <person name="Van Hul W."/>
        </authorList>
    </citation>
    <scope>VARIANTS CAEND HIS-81; CYS-218 AND ARG-225</scope>
</reference>
<reference key="48">
    <citation type="journal article" date="2002" name="J. Hum. Genet.">
        <title>A catalog of 106 single-nucleotide polymorphisms (SNPs) and 11 other types of variations in genes for transforming growth factor-beta1 (TGF-beta1) and its signaling pathway.</title>
        <authorList>
            <person name="Watanabe Y."/>
            <person name="Kinoshita A."/>
            <person name="Yamada T."/>
            <person name="Ohta T."/>
            <person name="Kishino T."/>
            <person name="Matsumoto N."/>
            <person name="Ishikawa M."/>
            <person name="Niikawa N."/>
            <person name="Yoshiura K."/>
        </authorList>
    </citation>
    <scope>VARIANT LEU-10</scope>
</reference>
<reference key="49">
    <citation type="journal article" date="2003" name="J. Biol. Chem.">
        <title>Transforming growth factor-beta-1 mutations in Camurati-Engelmann disease lead to increased signaling by altering either activation or secretion of the mutant protein.</title>
        <authorList>
            <person name="Janssens K."/>
            <person name="ten Dijke P."/>
            <person name="Ralston S.H."/>
            <person name="Bergmann C."/>
            <person name="Van Hul W."/>
        </authorList>
    </citation>
    <scope>CHARACTERIZATION OF VARIANTS CAEND HIS-81; CYS-218; ASP-222 AND ARG-225</scope>
</reference>
<reference key="50">
    <citation type="journal article" date="2003" name="J. Clin. Endocrinol. Metab.">
        <title>A mutation affecting the latency-associated peptide of TGFbeta1 in Camurati-Engelmann disease enhances osteoclast formation in vitro.</title>
        <authorList>
            <person name="McGowan N.W."/>
            <person name="MacPherson H."/>
            <person name="Janssens K."/>
            <person name="Van Hul W."/>
            <person name="Frith J.C."/>
            <person name="Fraser W.D."/>
            <person name="Ralston S.H."/>
            <person name="Helfrich M.H."/>
        </authorList>
    </citation>
    <scope>CHARACTERIZATION OF VARIANT CAEND CYS-218</scope>
</reference>
<reference key="51">
    <citation type="journal article" date="2004" name="Am. J. Med. Genet.">
        <title>TGFB1 mutations in four new families with Camurati-Engelmann disease: confirmation of independently arising LAP-domain-specific mutations.</title>
        <authorList>
            <person name="Kinoshita A."/>
            <person name="Fukumaki Y."/>
            <person name="Shirahama S."/>
            <person name="Miyahara A."/>
            <person name="Nishimura G."/>
            <person name="Haga N."/>
            <person name="Namba A."/>
            <person name="Ueda H."/>
            <person name="Hayashi H."/>
            <person name="Ikegawa S."/>
            <person name="Seidel J."/>
            <person name="Niikawa N."/>
            <person name="Yoshiura K."/>
        </authorList>
    </citation>
    <scope>VARIANTS CAEND GLY-223 AND ARG-223</scope>
</reference>
<sequence>MPPSGLRLLPLLLPLLWLLVLTPGRPAAGLSTCKTIDMELVKRKRIEAIRGQILSKLRLASPPSQGEVPPGPLPEAVLALYNSTRDRVAGESAEPEPEPEADYYAKEVTRVLMVETHNEIYDKFKQSTHSIYMFFNTSELREAVPEPVLLSRAELRLLRLKLKVEQHVELYQKYSNNSWRYLSNRLLAPSDSPEWLSFDVTGVVRQWLSRGGEIEGFRLSAHCSCDSRDNTLQVDINGFTTGRRGDLATIHGMNRPFLLLMATPLERAQHLQSSRHRRALDTNYCFSSTEKNCCVRQLYIDFRKDLGWKWIHEPKGYHANFCLGPCPYIWSLDTQYSKVLALYNQHNPGASAAPCCVPQALEPLPIVYYVGRKPKVEQLSNMIVRSCKCS</sequence>
<keyword id="KW-0002">3D-structure</keyword>
<keyword id="KW-0165">Cleavage on pair of basic residues</keyword>
<keyword id="KW-0903">Direct protein sequencing</keyword>
<keyword id="KW-0225">Disease variant</keyword>
<keyword id="KW-1015">Disulfide bond</keyword>
<keyword id="KW-0272">Extracellular matrix</keyword>
<keyword id="KW-0325">Glycoprotein</keyword>
<keyword id="KW-0339">Growth factor</keyword>
<keyword id="KW-0497">Mitogen</keyword>
<keyword id="KW-1267">Proteomics identification</keyword>
<keyword id="KW-1185">Reference proteome</keyword>
<keyword id="KW-0964">Secreted</keyword>
<keyword id="KW-0732">Signal</keyword>
<comment type="function">
    <text evidence="29 39">Transforming growth factor beta-1 proprotein: Precursor of the Latency-associated peptide (LAP) and Transforming growth factor beta-1 (TGF-beta-1) chains, which constitute the regulatory and active subunit of TGF-beta-1, respectively.</text>
</comment>
<comment type="function">
    <molecule>Latency-associated peptide</molecule>
    <text evidence="16 17 19 21 28 35 36 43">Required to maintain the Transforming growth factor beta-1 (TGF-beta-1) chain in a latent state during storage in extracellular matrix (PubMed:28117447). Associates non-covalently with TGF-beta-1 and regulates its activation via interaction with 'milieu molecules', such as LTBP1, LRRC32/GARP and LRRC33/NRROS, that control activation of TGF-beta-1 (PubMed:19651619, PubMed:19750484, PubMed:2022183, PubMed:22278742, PubMed:8617200, PubMed:8939931). Interaction with LRRC33/NRROS regulates activation of TGF-beta-1 in macrophages and microglia (Probable). Interaction with LRRC32/GARP controls activation of TGF-beta-1 on the surface of activated regulatory T-cells (Tregs) (PubMed:19651619, PubMed:19750484, PubMed:22278742). Interaction with integrins (ITGAV:ITGB6 or ITGAV:ITGB8) results in distortion of the Latency-associated peptide chain and subsequent release of the active TGF-beta-1 (PubMed:22278742, PubMed:28117447).</text>
</comment>
<comment type="function">
    <molecule>Transforming growth factor beta-1</molecule>
    <text evidence="1 16 17 18 19 21 24 25 28 29 30 31 35 36">Multifunctional protein that regulates the growth and differentiation of various cell types and is involved in various processes, such as normal development, immune function, microglia function and responses to neurodegeneration (By similarity). Activation into mature form follows different steps: following cleavage of the proprotein in the Golgi apparatus, Latency-associated peptide (LAP) and Transforming growth factor beta-1 (TGF-beta-1) chains remain non-covalently linked rendering TGF-beta-1 inactive during storage in extracellular matrix (PubMed:29109152). At the same time, LAP chain interacts with 'milieu molecules', such as LTBP1, LRRC32/GARP and LRRC33/NRROS that control activation of TGF-beta-1 and maintain it in a latent state during storage in extracellular milieus (PubMed:19651619, PubMed:19750484, PubMed:2022183, PubMed:22278742, PubMed:8617200, PubMed:8939931). TGF-beta-1 is released from LAP by integrins (ITGAV:ITGB6 or ITGAV:ITGB8): integrin-binding to LAP stabilizes an alternative conformation of the LAP bowtie tail and results in distortion of the LAP chain and subsequent release of the active TGF-beta-1 (PubMed:22278742, PubMed:28117447). Once activated following release of LAP, TGF-beta-1 acts by binding to TGF-beta receptors (TGFBR1 and TGFBR2), which transduce signal (PubMed:20207738). While expressed by many cells types, TGF-beta-1 only has a very localized range of action within cell environment thanks to fine regulation of its activation by Latency-associated peptide chain (LAP) and 'milieu molecules' (By similarity). Plays an important role in bone remodeling: acts as a potent stimulator of osteoblastic bone formation, causing chemotaxis, proliferation and differentiation in committed osteoblasts (By similarity). Can promote either T-helper 17 cells (Th17) or regulatory T-cells (Treg) lineage differentiation in a concentration-dependent manner (By similarity). At high concentrations, leads to FOXP3-mediated suppression of RORC and down-regulation of IL-17 expression, favoring Treg cell development (By similarity). At low concentrations in concert with IL-6 and IL-21, leads to expression of the IL-17 and IL-23 receptors, favoring differentiation to Th17 cells (By similarity). Stimulates sustained production of collagen through the activation of CREB3L1 by regulated intramembrane proteolysis (RIP) (PubMed:25310401). Mediates SMAD2/3 activation by inducing its phosphorylation and subsequent translocation to the nucleus (PubMed:25893292, PubMed:29483653, PubMed:30696809). Positively regulates odontoblastic differentiation in dental papilla cells, via promotion of IPO7-mediated translocation of phosphorylated SMAD2 to the nucleus and subsequent transcription of target genes (By similarity). Can induce epithelial-to-mesenchymal transition (EMT) and cell migration in various cell types (PubMed:25893292, PubMed:30696809).</text>
</comment>
<comment type="subunit">
    <text evidence="1 13 14 18 23 26 28 29 38">Homodimer; disulfide-linked (PubMed:20207738, PubMed:25209176, PubMed:28117447, PubMed:29109152). Interacts with the serine proteases, HTRA1 and HTRA3: the interaction with either inhibits TGFB1-mediated signaling and the HTRA protease activity is required for this inhibition (By similarity). May interact with THSD4; this interaction may lead to sequestration by FBN1 microfibril assembly and attenuation of TGFB signaling (By similarity). Interacts with CD109, DPT and ASPN (PubMed:16754747, PubMed:17827158, PubMed:9895299). Interacts with EFEMP2 (PubMed:27339457). Interacts with TSKU; the interaction contributes to regulation of the hair cycle (By similarity).</text>
</comment>
<comment type="subunit">
    <molecule>Latency-associated peptide</molecule>
    <text evidence="1 15 16 17 19 20 21 23 27 28 29 35 36 43">Homodimer; disulfide-linked (PubMed:28117447, PubMed:29109152). Interacts with transforming growth factor beta-1 (TGF-beta-1) chain; interaction is non-covalent and maintains TGF-beta-1 in a latent state; each latency-associated peptide (LAP) monomer interacts with TGF-beta-1 in the other monomer (PubMed:29109152). Interacts with LTBP1; leading to regulation of TGF-beta-1 activation (PubMed:2022183, PubMed:8617200, PubMed:8939931). Interacts with LRRC32/GARP; leading to regulation of TGF-beta-1 activation on the surface of activated regulatory T-cells (Tregs) (PubMed:19651619, PubMed:19750484, PubMed:22278742). Interacts with LRRC33/NRROS; leading to regulation of TGF-beta-1 in macrophages and microglia (Probable). Interacts (via cell attachment site) with integrins ITGAV and ITGB6 (ITGAV:ITGB6), leading to release of the active TGF-beta-1 (PubMed:22278742, PubMed:28117447). Interacts with NREP; the interaction results in a decrease in TGFB1 autoinduction (By similarity). Interacts with HSP90AB1; inhibits latent TGFB1 activation (PubMed:20599762). Interact with PSG9; leading to TGFB1 activation (PubMed:27389696). Interacts with TGFBR3 (PubMed:18184661).</text>
</comment>
<comment type="subunit">
    <molecule>Transforming growth factor beta-1</molecule>
    <text evidence="18 23 28 29">Homodimer; disulfide-linked (PubMed:20207738, PubMed:25209176, PubMed:28117447, PubMed:29109152). Interacts with TGF-beta receptors (TGFBR1 and TGFBR2), leading to signal transduction (PubMed:20207738).</text>
</comment>
<comment type="interaction">
    <interactant intactId="EBI-779636">
        <id>P01137</id>
    </interactant>
    <interactant intactId="EBI-10173507">
        <id>Q6UY14-3</id>
        <label>ADAMTSL4</label>
    </interactant>
    <organismsDiffer>false</organismsDiffer>
    <experiments>3</experiments>
</comment>
<comment type="interaction">
    <interactant intactId="EBI-779636">
        <id>P01137</id>
    </interactant>
    <interactant intactId="EBI-77613">
        <id>P05067</id>
        <label>APP</label>
    </interactant>
    <organismsDiffer>false</organismsDiffer>
    <experiments>3</experiments>
</comment>
<comment type="interaction">
    <interactant intactId="EBI-779636">
        <id>P01137</id>
    </interactant>
    <interactant intactId="EBI-744545">
        <id>Q8NEC5</id>
        <label>CATSPER1</label>
    </interactant>
    <organismsDiffer>false</organismsDiffer>
    <experiments>3</experiments>
</comment>
<comment type="interaction">
    <interactant intactId="EBI-779636">
        <id>P01137</id>
    </interactant>
    <interactant intactId="EBI-3867333">
        <id>A8MQ03</id>
        <label>CYSRT1</label>
    </interactant>
    <organismsDiffer>false</organismsDiffer>
    <experiments>3</experiments>
</comment>
<comment type="interaction">
    <interactant intactId="EBI-779636">
        <id>P01137</id>
    </interactant>
    <interactant intactId="EBI-2564275">
        <id>Q14689</id>
        <label>DIP2A</label>
    </interactant>
    <organismsDiffer>false</organismsDiffer>
    <experiments>2</experiments>
</comment>
<comment type="interaction">
    <interactant intactId="EBI-779636">
        <id>P01137</id>
    </interactant>
    <interactant intactId="EBI-2834630">
        <id>P17813</id>
        <label>ENG</label>
    </interactant>
    <organismsDiffer>false</organismsDiffer>
    <experiments>2</experiments>
</comment>
<comment type="interaction">
    <interactant intactId="EBI-779636">
        <id>P01137</id>
    </interactant>
    <interactant intactId="EBI-11977403">
        <id>A0A0C3SFZ9</id>
        <label>FCHO1</label>
    </interactant>
    <organismsDiffer>false</organismsDiffer>
    <experiments>3</experiments>
</comment>
<comment type="interaction">
    <interactant intactId="EBI-779636">
        <id>P01137</id>
    </interactant>
    <interactant intactId="EBI-2349801">
        <id>Q12841</id>
        <label>FSTL1</label>
    </interactant>
    <organismsDiffer>false</organismsDiffer>
    <experiments>2</experiments>
</comment>
<comment type="interaction">
    <interactant intactId="EBI-779636">
        <id>P01137</id>
    </interactant>
    <interactant intactId="EBI-740785">
        <id>P49639</id>
        <label>HOXA1</label>
    </interactant>
    <organismsDiffer>false</organismsDiffer>
    <experiments>3</experiments>
</comment>
<comment type="interaction">
    <interactant intactId="EBI-779636">
        <id>P01137</id>
    </interactant>
    <interactant intactId="EBI-11959885">
        <id>Q07627</id>
        <label>KRTAP1-1</label>
    </interactant>
    <organismsDiffer>false</organismsDiffer>
    <experiments>3</experiments>
</comment>
<comment type="interaction">
    <interactant intactId="EBI-779636">
        <id>P01137</id>
    </interactant>
    <interactant intactId="EBI-11749135">
        <id>Q8IUG1</id>
        <label>KRTAP1-3</label>
    </interactant>
    <organismsDiffer>false</organismsDiffer>
    <experiments>3</experiments>
</comment>
<comment type="interaction">
    <interactant intactId="EBI-779636">
        <id>P01137</id>
    </interactant>
    <interactant intactId="EBI-10171774">
        <id>P60410</id>
        <label>KRTAP10-8</label>
    </interactant>
    <organismsDiffer>false</organismsDiffer>
    <experiments>3</experiments>
</comment>
<comment type="interaction">
    <interactant intactId="EBI-779636">
        <id>P01137</id>
    </interactant>
    <interactant intactId="EBI-10302392">
        <id>Q9BYQ6</id>
        <label>KRTAP4-11</label>
    </interactant>
    <organismsDiffer>false</organismsDiffer>
    <experiments>3</experiments>
</comment>
<comment type="interaction">
    <interactant intactId="EBI-779636">
        <id>P01137</id>
    </interactant>
    <interactant intactId="EBI-11962058">
        <id>Q5T7P2</id>
        <label>LCE1A</label>
    </interactant>
    <organismsDiffer>false</organismsDiffer>
    <experiments>3</experiments>
</comment>
<comment type="interaction">
    <interactant intactId="EBI-779636">
        <id>P01137</id>
    </interactant>
    <interactant intactId="EBI-12224199">
        <id>Q5T751</id>
        <label>LCE1C</label>
    </interactant>
    <organismsDiffer>false</organismsDiffer>
    <experiments>3</experiments>
</comment>
<comment type="interaction">
    <interactant intactId="EBI-779636">
        <id>P01137</id>
    </interactant>
    <interactant intactId="EBI-11741311">
        <id>Q5T752</id>
        <label>LCE1D</label>
    </interactant>
    <organismsDiffer>false</organismsDiffer>
    <experiments>3</experiments>
</comment>
<comment type="interaction">
    <interactant intactId="EBI-779636">
        <id>P01137</id>
    </interactant>
    <interactant intactId="EBI-11478468">
        <id>O14633</id>
        <label>LCE2B</label>
    </interactant>
    <organismsDiffer>false</organismsDiffer>
    <experiments>3</experiments>
</comment>
<comment type="interaction">
    <interactant intactId="EBI-779636">
        <id>P01137</id>
    </interactant>
    <interactant intactId="EBI-11973993">
        <id>Q5TA81</id>
        <label>LCE2C</label>
    </interactant>
    <organismsDiffer>false</organismsDiffer>
    <experiments>3</experiments>
</comment>
<comment type="interaction">
    <interactant intactId="EBI-779636">
        <id>P01137</id>
    </interactant>
    <interactant intactId="EBI-9394625">
        <id>Q5TA76</id>
        <label>LCE3A</label>
    </interactant>
    <organismsDiffer>false</organismsDiffer>
    <experiments>3</experiments>
</comment>
<comment type="interaction">
    <interactant intactId="EBI-779636">
        <id>P01137</id>
    </interactant>
    <interactant intactId="EBI-11974495">
        <id>Q5TA77</id>
        <label>LCE3B</label>
    </interactant>
    <organismsDiffer>false</organismsDiffer>
    <experiments>3</experiments>
</comment>
<comment type="interaction">
    <interactant intactId="EBI-779636">
        <id>P01137</id>
    </interactant>
    <interactant intactId="EBI-6658837">
        <id>Q9BYE3</id>
        <label>LCE3D</label>
    </interactant>
    <organismsDiffer>false</organismsDiffer>
    <experiments>3</experiments>
</comment>
<comment type="interaction">
    <interactant intactId="EBI-779636">
        <id>P01137</id>
    </interactant>
    <interactant intactId="EBI-744222">
        <id>O60711</id>
        <label>LPXN</label>
    </interactant>
    <organismsDiffer>false</organismsDiffer>
    <experiments>3</experiments>
</comment>
<comment type="interaction">
    <interactant intactId="EBI-779636">
        <id>P01137</id>
    </interactant>
    <interactant intactId="EBI-15796956">
        <id>Q14392</id>
        <label>LRRC32</label>
    </interactant>
    <organismsDiffer>false</organismsDiffer>
    <experiments>4</experiments>
</comment>
<comment type="interaction">
    <interactant intactId="EBI-779636">
        <id>P01137</id>
    </interactant>
    <interactant intactId="EBI-11173861">
        <id>Q14766-1</id>
        <label>LTBP1</label>
    </interactant>
    <organismsDiffer>false</organismsDiffer>
    <experiments>4</experiments>
</comment>
<comment type="interaction">
    <interactant intactId="EBI-779636">
        <id>P01137</id>
    </interactant>
    <interactant intactId="EBI-748397">
        <id>P50222</id>
        <label>MEOX2</label>
    </interactant>
    <organismsDiffer>false</organismsDiffer>
    <experiments>3</experiments>
</comment>
<comment type="interaction">
    <interactant intactId="EBI-779636">
        <id>P01137</id>
    </interactant>
    <interactant intactId="EBI-395883">
        <id>P07237</id>
        <label>P4HB</label>
    </interactant>
    <organismsDiffer>false</organismsDiffer>
    <experiments>3</experiments>
</comment>
<comment type="interaction">
    <interactant intactId="EBI-779636">
        <id>P01137</id>
    </interactant>
    <interactant intactId="EBI-17236143">
        <id>Q12837</id>
        <label>POU4F2</label>
    </interactant>
    <organismsDiffer>false</organismsDiffer>
    <experiments>3</experiments>
</comment>
<comment type="interaction">
    <interactant intactId="EBI-779636">
        <id>P01137</id>
    </interactant>
    <interactant intactId="EBI-716740">
        <id>P11464</id>
        <label>PSG1</label>
    </interactant>
    <organismsDiffer>false</organismsDiffer>
    <experiments>3</experiments>
</comment>
<comment type="interaction">
    <interactant intactId="EBI-779636">
        <id>P01137</id>
    </interactant>
    <interactant intactId="EBI-779636">
        <id>P01137</id>
        <label>TGFB1</label>
    </interactant>
    <organismsDiffer>false</organismsDiffer>
    <experiments>2</experiments>
</comment>
<comment type="interaction">
    <interactant intactId="EBI-779636">
        <id>P01137</id>
    </interactant>
    <interactant intactId="EBI-1027557">
        <id>P36897</id>
        <label>TGFBR1</label>
    </interactant>
    <organismsDiffer>false</organismsDiffer>
    <experiments>2</experiments>
</comment>
<comment type="interaction">
    <interactant intactId="EBI-779636">
        <id>P01137</id>
    </interactant>
    <interactant intactId="EBI-296151">
        <id>P37173</id>
        <label>TGFBR2</label>
    </interactant>
    <organismsDiffer>false</organismsDiffer>
    <experiments>11</experiments>
</comment>
<comment type="interaction">
    <interactant intactId="EBI-779636">
        <id>P01137</id>
    </interactant>
    <interactant intactId="EBI-2852679">
        <id>Q03167</id>
        <label>TGFBR3</label>
    </interactant>
    <organismsDiffer>false</organismsDiffer>
    <experiments>2</experiments>
</comment>
<comment type="interaction">
    <interactant intactId="EBI-779636">
        <id>P01137</id>
    </interactant>
    <interactant intactId="EBI-2530274">
        <id>P07996</id>
        <label>THBS1</label>
    </interactant>
    <organismsDiffer>false</organismsDiffer>
    <experiments>2</experiments>
</comment>
<comment type="interaction">
    <interactant intactId="EBI-779636">
        <id>P01137</id>
    </interactant>
    <interactant intactId="EBI-2821024">
        <id>P22105</id>
        <label>TNXB</label>
    </interactant>
    <organismsDiffer>false</organismsDiffer>
    <experiments>3</experiments>
</comment>
<comment type="interaction">
    <interactant intactId="EBI-779636">
        <id>P01137</id>
    </interactant>
    <interactant intactId="EBI-6620843">
        <id>Q90998</id>
        <label>TGFBR3</label>
    </interactant>
    <organismsDiffer>true</organismsDiffer>
    <experiments>2</experiments>
</comment>
<comment type="interaction">
    <interactant intactId="EBI-15487336">
        <id>PRO_0000033762</id>
    </interactant>
    <interactant intactId="EBI-716740">
        <id>P11464</id>
        <label>PSG1</label>
    </interactant>
    <organismsDiffer>false</organismsDiffer>
    <experiments>2</experiments>
</comment>
<comment type="subcellular location">
    <molecule>Latency-associated peptide</molecule>
    <subcellularLocation>
        <location evidence="14">Secreted</location>
        <location evidence="14">Extracellular space</location>
        <location evidence="14">Extracellular matrix</location>
    </subcellularLocation>
</comment>
<comment type="subcellular location">
    <molecule>Transforming growth factor beta-1</molecule>
    <subcellularLocation>
        <location evidence="14 30">Secreted</location>
    </subcellularLocation>
</comment>
<comment type="tissue specificity">
    <text evidence="6 14">Highly expressed in bone (PubMed:11746498, PubMed:17827158). Abundantly expressed in articular cartilage and chondrocytes and is increased in osteoarthritis (OA) (PubMed:11746498, PubMed:17827158). Colocalizes with ASPN in chondrocytes within OA lesions of articular cartilage (PubMed:17827158).</text>
</comment>
<comment type="domain">
    <molecule>Latency-associated peptide</molecule>
    <text evidence="2">The 'straitjacket' and 'arm' domains encircle the Transforming growth factor beta-1 (TGF-beta-1) monomers and are fastened together by strong bonding between Lys-56 and Tyr-103/Tyr-104.</text>
</comment>
<comment type="domain">
    <molecule>Latency-associated peptide</molecule>
    <text evidence="28">The cell attachment site motif mediates binding to integrins (ITGAV:ITGB6 or ITGAV:ITGB8) (PubMed:28117447). The motif locates to a long loop in the arm domain called the bowtie tail (PubMed:28117447). Integrin-binding stabilizes an alternative conformation of the bowtie tail (PubMed:28117447). Activation by integrin requires force application by the actin cytoskeleton, which is resisted by the 'milieu molecules' (such as LTBP1, LRRC32/GARP and/or LRRC33/NRROS), resulting in distortion of the prodomain and release of the active TGF-beta-1 (PubMed:28117447).</text>
</comment>
<comment type="PTM">
    <text evidence="34">Transforming growth factor beta-1 proprotein: The precursor proprotein is cleaved in the Golgi apparatus by FURIN to form Transforming growth factor beta-1 (TGF-beta-1) and Latency-associated peptide (LAP) chains, which remain non-covalently linked, rendering TGF-beta-1 inactive.</text>
</comment>
<comment type="PTM">
    <molecule>Latency-associated peptide</molecule>
    <text evidence="22 28 32">N-glycosylated (PubMed:2493139, PubMed:28117447, PubMed:3162913). Deglycosylation leads to activation of Transforming growth factor beta-1 (TGF-beta-1); mechanisms triggering deglycosylation-driven activation of TGF-beta-1 are however unclear (PubMed:2493139).</text>
</comment>
<comment type="polymorphism">
    <text evidence="37">In post-menopausal Japanese women, the frequency of Leu-10 is higher in subjects with osteoporosis than in controls.</text>
</comment>
<comment type="disease" evidence="4 5 8 9 10">
    <disease id="DI-01314">
        <name>Camurati-Engelmann disease</name>
        <acronym>CAEND</acronym>
        <description>An autosomal dominant disorder characterized by hyperostosis and sclerosis of the diaphyses of long bones. The disease typically presents in early childhood with pain, muscular weakness and waddling gait, and in some cases other features such as exophthalmos, facial paralysis, hearing difficulties and loss of vision.</description>
        <dbReference type="MIM" id="131300"/>
    </disease>
    <text>The disease is caused by variants affecting the gene represented in this entry.</text>
</comment>
<comment type="disease" evidence="30">
    <disease id="DI-05431">
        <name>Inflammatory bowel disease, immunodeficiency, and encephalopathy</name>
        <acronym>IBDIMDE</acronym>
        <description>An autosomal recessive disorder characterized by severe infantile inflammatory bowel disease manifesting as bloody diarrhea and failure to thrive, global developmental delay, epilepsy, brain atrophy and encephalopathy. Affected individuals suffer from recurrent infections associated with impaired T-cell response to stimulation and decreased T-cell subsets, including regulatory and helper T cells.</description>
        <dbReference type="MIM" id="618213"/>
    </disease>
    <text>The disease is caused by variants affecting the gene represented in this entry.</text>
</comment>
<comment type="miscellaneous">
    <text evidence="23">TGF-beta-1 is inactivated by fresolimumab (also named GC1008), a monoclonal-neutralizing antibody.</text>
</comment>
<comment type="similarity">
    <text evidence="40">Belongs to the TGF-beta family.</text>
</comment>
<comment type="online information" name="Wikipedia">
    <link uri="https://en.wikipedia.org/wiki/TGF_beta_1"/>
    <text>TGF beta-1 entry</text>
</comment>
<dbReference type="EMBL" id="X05839">
    <property type="protein sequence ID" value="CAA29283.1"/>
    <property type="molecule type" value="Genomic_DNA"/>
</dbReference>
<dbReference type="EMBL" id="X05840">
    <property type="protein sequence ID" value="CAA29283.1"/>
    <property type="status" value="JOINED"/>
    <property type="molecule type" value="Genomic_DNA"/>
</dbReference>
<dbReference type="EMBL" id="X05843">
    <property type="protein sequence ID" value="CAA29283.1"/>
    <property type="status" value="JOINED"/>
    <property type="molecule type" value="Genomic_DNA"/>
</dbReference>
<dbReference type="EMBL" id="X05844">
    <property type="protein sequence ID" value="CAA29283.1"/>
    <property type="status" value="JOINED"/>
    <property type="molecule type" value="Genomic_DNA"/>
</dbReference>
<dbReference type="EMBL" id="X05849">
    <property type="protein sequence ID" value="CAA29283.1"/>
    <property type="status" value="JOINED"/>
    <property type="molecule type" value="Genomic_DNA"/>
</dbReference>
<dbReference type="EMBL" id="X05850">
    <property type="protein sequence ID" value="CAA29283.1"/>
    <property type="status" value="JOINED"/>
    <property type="molecule type" value="Genomic_DNA"/>
</dbReference>
<dbReference type="EMBL" id="X02812">
    <property type="protein sequence ID" value="CAA26580.1"/>
    <property type="molecule type" value="mRNA"/>
</dbReference>
<dbReference type="EMBL" id="BT007245">
    <property type="protein sequence ID" value="AAP35909.1"/>
    <property type="molecule type" value="mRNA"/>
</dbReference>
<dbReference type="EMBL" id="AK291907">
    <property type="protein sequence ID" value="BAF84596.1"/>
    <property type="molecule type" value="mRNA"/>
</dbReference>
<dbReference type="EMBL" id="CH471126">
    <property type="protein sequence ID" value="EAW57032.1"/>
    <property type="molecule type" value="Genomic_DNA"/>
</dbReference>
<dbReference type="EMBL" id="BC001180">
    <property type="protein sequence ID" value="AAH01180.1"/>
    <property type="molecule type" value="mRNA"/>
</dbReference>
<dbReference type="EMBL" id="BC000125">
    <property type="protein sequence ID" value="AAH00125.1"/>
    <property type="molecule type" value="mRNA"/>
</dbReference>
<dbReference type="EMBL" id="BC022242">
    <property type="protein sequence ID" value="AAH22242.1"/>
    <property type="molecule type" value="mRNA"/>
</dbReference>
<dbReference type="EMBL" id="M38449">
    <property type="protein sequence ID" value="AAA36735.1"/>
    <property type="molecule type" value="mRNA"/>
</dbReference>
<dbReference type="CCDS" id="CCDS33031.1"/>
<dbReference type="PIR" id="A27513">
    <property type="entry name" value="WFHU2"/>
</dbReference>
<dbReference type="RefSeq" id="NP_000651.3">
    <property type="nucleotide sequence ID" value="NM_000660.7"/>
</dbReference>
<dbReference type="PDB" id="1KLA">
    <property type="method" value="NMR"/>
    <property type="chains" value="A/B=279-390"/>
</dbReference>
<dbReference type="PDB" id="1KLC">
    <property type="method" value="NMR"/>
    <property type="chains" value="A/B=279-390"/>
</dbReference>
<dbReference type="PDB" id="1KLD">
    <property type="method" value="NMR"/>
    <property type="chains" value="A/B=279-390"/>
</dbReference>
<dbReference type="PDB" id="3KFD">
    <property type="method" value="X-ray"/>
    <property type="resolution" value="3.00 A"/>
    <property type="chains" value="A/B/C/D=279-390"/>
</dbReference>
<dbReference type="PDB" id="4KV5">
    <property type="method" value="X-ray"/>
    <property type="resolution" value="3.00 A"/>
    <property type="chains" value="A/B/C/D=279-390"/>
</dbReference>
<dbReference type="PDB" id="5FFO">
    <property type="method" value="X-ray"/>
    <property type="resolution" value="3.49 A"/>
    <property type="chains" value="C/D/G/H=34-390"/>
</dbReference>
<dbReference type="PDB" id="5VQP">
    <property type="method" value="X-ray"/>
    <property type="resolution" value="2.90 A"/>
    <property type="chains" value="A=30-390"/>
</dbReference>
<dbReference type="PDB" id="6OM2">
    <property type="method" value="X-ray"/>
    <property type="resolution" value="2.77 A"/>
    <property type="chains" value="E/F=242-252"/>
</dbReference>
<dbReference type="PDB" id="6P7J">
    <property type="method" value="X-ray"/>
    <property type="resolution" value="3.50 A"/>
    <property type="chains" value="A=30-278"/>
</dbReference>
<dbReference type="PDB" id="7Y1R">
    <property type="method" value="EM"/>
    <property type="resolution" value="4.01 A"/>
    <property type="chains" value="A/B=30-390"/>
</dbReference>
<dbReference type="PDB" id="7Y1T">
    <property type="method" value="EM"/>
    <property type="resolution" value="3.24 A"/>
    <property type="chains" value="D=30-390"/>
</dbReference>
<dbReference type="PDB" id="8UDZ">
    <property type="method" value="X-ray"/>
    <property type="resolution" value="2.21 A"/>
    <property type="chains" value="A/B=30-390"/>
</dbReference>
<dbReference type="PDB" id="8VSC">
    <property type="method" value="EM"/>
    <property type="resolution" value="3.00 A"/>
    <property type="chains" value="A/B=1-390"/>
</dbReference>
<dbReference type="PDB" id="8VSD">
    <property type="method" value="EM"/>
    <property type="resolution" value="3.20 A"/>
    <property type="chains" value="E/F=30-390"/>
</dbReference>
<dbReference type="PDB" id="9FDY">
    <property type="method" value="EM"/>
    <property type="resolution" value="3.40 A"/>
    <property type="chains" value="A/B=279-390"/>
</dbReference>
<dbReference type="PDB" id="9FKP">
    <property type="method" value="EM"/>
    <property type="resolution" value="3.72 A"/>
    <property type="chains" value="A/B=279-390"/>
</dbReference>
<dbReference type="PDBsum" id="1KLA"/>
<dbReference type="PDBsum" id="1KLC"/>
<dbReference type="PDBsum" id="1KLD"/>
<dbReference type="PDBsum" id="3KFD"/>
<dbReference type="PDBsum" id="4KV5"/>
<dbReference type="PDBsum" id="5FFO"/>
<dbReference type="PDBsum" id="5VQP"/>
<dbReference type="PDBsum" id="6OM2"/>
<dbReference type="PDBsum" id="6P7J"/>
<dbReference type="PDBsum" id="7Y1R"/>
<dbReference type="PDBsum" id="7Y1T"/>
<dbReference type="PDBsum" id="8UDZ"/>
<dbReference type="PDBsum" id="8VSC"/>
<dbReference type="PDBsum" id="8VSD"/>
<dbReference type="PDBsum" id="9FDY"/>
<dbReference type="PDBsum" id="9FKP"/>
<dbReference type="EMDB" id="EMD-16460"/>
<dbReference type="EMDB" id="EMD-33571"/>
<dbReference type="EMDB" id="EMD-33572"/>
<dbReference type="EMDB" id="EMD-33573"/>
<dbReference type="EMDB" id="EMD-43493"/>
<dbReference type="EMDB" id="EMD-50326"/>
<dbReference type="EMDB" id="EMD-50333"/>
<dbReference type="EMDB" id="EMD-50524"/>
<dbReference type="SASBDB" id="P01137"/>
<dbReference type="SMR" id="P01137"/>
<dbReference type="BioGRID" id="112898">
    <property type="interactions" value="364"/>
</dbReference>
<dbReference type="ComplexPortal" id="CPX-529">
    <property type="entry name" value="TGF-beta-1-TGFR complex"/>
</dbReference>
<dbReference type="ComplexPortal" id="CPX-602">
    <property type="entry name" value="TGF-beta-1 complex"/>
</dbReference>
<dbReference type="CORUM" id="P01137"/>
<dbReference type="DIP" id="DIP-5934N"/>
<dbReference type="FunCoup" id="P01137">
    <property type="interactions" value="1355"/>
</dbReference>
<dbReference type="IntAct" id="P01137">
    <property type="interactions" value="131"/>
</dbReference>
<dbReference type="MINT" id="P01137"/>
<dbReference type="STRING" id="9606.ENSP00000221930"/>
<dbReference type="BindingDB" id="P01137"/>
<dbReference type="ChEMBL" id="CHEMBL1795178"/>
<dbReference type="DrugBank" id="DB12953">
    <property type="generic name" value="Disitertide"/>
</dbReference>
<dbReference type="DrugBank" id="DB10770">
    <property type="generic name" value="Foreskin fibroblast (neonatal)"/>
</dbReference>
<dbReference type="DrugBank" id="DB10772">
    <property type="generic name" value="Foreskin keratinocyte (neonatal)"/>
</dbReference>
<dbReference type="DrugBank" id="DB11911">
    <property type="generic name" value="Galunisertib"/>
</dbReference>
<dbReference type="DrugBank" id="DB14740">
    <property type="generic name" value="Hyaluronidase"/>
</dbReference>
<dbReference type="DrugBank" id="DB06205">
    <property type="generic name" value="Hyaluronidase (human recombinant)"/>
</dbReference>
<dbReference type="DrugBank" id="DB00070">
    <property type="generic name" value="Hyaluronidase (ovine)"/>
</dbReference>
<dbReference type="DrugBank" id="DB04951">
    <property type="generic name" value="Pirfenidone"/>
</dbReference>
<dbReference type="DrugBank" id="DB01162">
    <property type="generic name" value="Terazosin"/>
</dbReference>
<dbReference type="GlyConnect" id="1835">
    <property type="glycosylation" value="1 N-Linked glycan (1 site)"/>
</dbReference>
<dbReference type="GlyCosmos" id="P01137">
    <property type="glycosylation" value="3 sites, 1 glycan"/>
</dbReference>
<dbReference type="GlyGen" id="P01137">
    <property type="glycosylation" value="4 sites, 10 N-linked glycans (3 sites), 1 O-linked glycan (1 site)"/>
</dbReference>
<dbReference type="iPTMnet" id="P01137"/>
<dbReference type="PhosphoSitePlus" id="P01137"/>
<dbReference type="BioMuta" id="TGFB1"/>
<dbReference type="DMDM" id="135674"/>
<dbReference type="OGP" id="P01137"/>
<dbReference type="jPOST" id="P01137"/>
<dbReference type="MassIVE" id="P01137"/>
<dbReference type="PaxDb" id="9606-ENSP00000221930"/>
<dbReference type="PeptideAtlas" id="P01137"/>
<dbReference type="ProteomicsDB" id="51337"/>
<dbReference type="Pumba" id="P01137"/>
<dbReference type="ABCD" id="P01137">
    <property type="antibodies" value="11 sequenced antibodies"/>
</dbReference>
<dbReference type="CPTC" id="P01137">
    <property type="antibodies" value="1 antibody"/>
</dbReference>
<dbReference type="DNASU" id="7040"/>
<dbReference type="Ensembl" id="ENST00000221930.6">
    <property type="protein sequence ID" value="ENSP00000221930.4"/>
    <property type="gene ID" value="ENSG00000105329.11"/>
</dbReference>
<dbReference type="GeneID" id="7040"/>
<dbReference type="KEGG" id="hsa:7040"/>
<dbReference type="MANE-Select" id="ENST00000221930.6">
    <property type="protein sequence ID" value="ENSP00000221930.4"/>
    <property type="RefSeq nucleotide sequence ID" value="NM_000660.7"/>
    <property type="RefSeq protein sequence ID" value="NP_000651.3"/>
</dbReference>
<dbReference type="UCSC" id="uc002oqh.4">
    <property type="organism name" value="human"/>
</dbReference>
<dbReference type="AGR" id="HGNC:11766"/>
<dbReference type="CTD" id="7040"/>
<dbReference type="DisGeNET" id="7040"/>
<dbReference type="GeneCards" id="TGFB1"/>
<dbReference type="GeneReviews" id="TGFB1"/>
<dbReference type="HGNC" id="HGNC:11766">
    <property type="gene designation" value="TGFB1"/>
</dbReference>
<dbReference type="MalaCards" id="TGFB1"/>
<dbReference type="MIM" id="131300">
    <property type="type" value="phenotype"/>
</dbReference>
<dbReference type="MIM" id="190180">
    <property type="type" value="gene"/>
</dbReference>
<dbReference type="MIM" id="618213">
    <property type="type" value="phenotype"/>
</dbReference>
<dbReference type="neXtProt" id="NX_P01137"/>
<dbReference type="OpenTargets" id="ENSG00000105329"/>
<dbReference type="Orphanet" id="1328">
    <property type="disease" value="Camurati-Engelmann disease"/>
</dbReference>
<dbReference type="Orphanet" id="586">
    <property type="disease" value="Cystic fibrosis"/>
</dbReference>
<dbReference type="Orphanet" id="565788">
    <property type="disease" value="Infantile inflammatory bowel disease with neurological involvement"/>
</dbReference>
<dbReference type="PharmGKB" id="PA350"/>
<dbReference type="eggNOG" id="KOG3900">
    <property type="taxonomic scope" value="Eukaryota"/>
</dbReference>
<dbReference type="GeneTree" id="ENSGT00940000160457"/>
<dbReference type="HOGENOM" id="CLU_039840_0_0_1"/>
<dbReference type="InParanoid" id="P01137"/>
<dbReference type="OMA" id="SHNCCLK"/>
<dbReference type="OrthoDB" id="8863549at2759"/>
<dbReference type="PAN-GO" id="P01137">
    <property type="GO annotations" value="9 GO annotations based on evolutionary models"/>
</dbReference>
<dbReference type="PhylomeDB" id="P01137"/>
<dbReference type="TreeFam" id="TF318514"/>
<dbReference type="PathwayCommons" id="P01137"/>
<dbReference type="Reactome" id="R-HSA-114608">
    <property type="pathway name" value="Platelet degranulation"/>
</dbReference>
<dbReference type="Reactome" id="R-HSA-168277">
    <property type="pathway name" value="Influenza Virus Induced Apoptosis"/>
</dbReference>
<dbReference type="Reactome" id="R-HSA-202733">
    <property type="pathway name" value="Cell surface interactions at the vascular wall"/>
</dbReference>
<dbReference type="Reactome" id="R-HSA-2129379">
    <property type="pathway name" value="Molecules associated with elastic fibres"/>
</dbReference>
<dbReference type="Reactome" id="R-HSA-2173788">
    <property type="pathway name" value="Downregulation of TGF-beta receptor signaling"/>
</dbReference>
<dbReference type="Reactome" id="R-HSA-2173789">
    <property type="pathway name" value="TGF-beta receptor signaling activates SMADs"/>
</dbReference>
<dbReference type="Reactome" id="R-HSA-2173791">
    <property type="pathway name" value="TGF-beta receptor signaling in EMT (epithelial to mesenchymal transition)"/>
</dbReference>
<dbReference type="Reactome" id="R-HSA-3000170">
    <property type="pathway name" value="Syndecan interactions"/>
</dbReference>
<dbReference type="Reactome" id="R-HSA-3000178">
    <property type="pathway name" value="ECM proteoglycans"/>
</dbReference>
<dbReference type="Reactome" id="R-HSA-3304356">
    <property type="pathway name" value="SMAD2/3 Phosphorylation Motif Mutants in Cancer"/>
</dbReference>
<dbReference type="Reactome" id="R-HSA-3642279">
    <property type="pathway name" value="TGFBR2 MSI Frameshift Mutants in Cancer"/>
</dbReference>
<dbReference type="Reactome" id="R-HSA-3645790">
    <property type="pathway name" value="TGFBR2 Kinase Domain Mutants in Cancer"/>
</dbReference>
<dbReference type="Reactome" id="R-HSA-3656532">
    <property type="pathway name" value="TGFBR1 KD Mutants in Cancer"/>
</dbReference>
<dbReference type="Reactome" id="R-HSA-3656535">
    <property type="pathway name" value="TGFBR1 LBD Mutants in Cancer"/>
</dbReference>
<dbReference type="Reactome" id="R-HSA-381340">
    <property type="pathway name" value="Transcriptional regulation of white adipocyte differentiation"/>
</dbReference>
<dbReference type="Reactome" id="R-HSA-5689603">
    <property type="pathway name" value="UCH proteinases"/>
</dbReference>
<dbReference type="Reactome" id="R-HSA-6785807">
    <property type="pathway name" value="Interleukin-4 and Interleukin-13 signaling"/>
</dbReference>
<dbReference type="Reactome" id="R-HSA-8941855">
    <property type="pathway name" value="RUNX3 regulates CDKN1A transcription"/>
</dbReference>
<dbReference type="Reactome" id="R-HSA-8941858">
    <property type="pathway name" value="Regulation of RUNX3 expression and activity"/>
</dbReference>
<dbReference type="Reactome" id="R-HSA-8951936">
    <property type="pathway name" value="RUNX3 regulates p14-ARF"/>
</dbReference>
<dbReference type="Reactome" id="R-HSA-9839389">
    <property type="pathway name" value="TGFBR3 regulates TGF-beta signaling"/>
</dbReference>
<dbReference type="SignaLink" id="P01137"/>
<dbReference type="SIGNOR" id="P01137"/>
<dbReference type="BioGRID-ORCS" id="7040">
    <property type="hits" value="11 hits in 1160 CRISPR screens"/>
</dbReference>
<dbReference type="ChiTaRS" id="TGFB1">
    <property type="organism name" value="human"/>
</dbReference>
<dbReference type="EvolutionaryTrace" id="P01137"/>
<dbReference type="GeneWiki" id="TGF_beta_1"/>
<dbReference type="GenomeRNAi" id="7040"/>
<dbReference type="Pharos" id="P01137">
    <property type="development level" value="Tbio"/>
</dbReference>
<dbReference type="PRO" id="PR:P01137"/>
<dbReference type="Proteomes" id="UP000005640">
    <property type="component" value="Chromosome 19"/>
</dbReference>
<dbReference type="RNAct" id="P01137">
    <property type="molecule type" value="protein"/>
</dbReference>
<dbReference type="GO" id="GO:0030424">
    <property type="term" value="C:axon"/>
    <property type="evidence" value="ECO:0007669"/>
    <property type="project" value="Ensembl"/>
</dbReference>
<dbReference type="GO" id="GO:0072562">
    <property type="term" value="C:blood microparticle"/>
    <property type="evidence" value="ECO:0007005"/>
    <property type="project" value="UniProtKB"/>
</dbReference>
<dbReference type="GO" id="GO:0009986">
    <property type="term" value="C:cell surface"/>
    <property type="evidence" value="ECO:0000315"/>
    <property type="project" value="BHF-UCL"/>
</dbReference>
<dbReference type="GO" id="GO:0062023">
    <property type="term" value="C:collagen-containing extracellular matrix"/>
    <property type="evidence" value="ECO:0007005"/>
    <property type="project" value="BHF-UCL"/>
</dbReference>
<dbReference type="GO" id="GO:0005737">
    <property type="term" value="C:cytoplasm"/>
    <property type="evidence" value="ECO:0000314"/>
    <property type="project" value="BHF-UCL"/>
</dbReference>
<dbReference type="GO" id="GO:0031012">
    <property type="term" value="C:extracellular matrix"/>
    <property type="evidence" value="ECO:0000250"/>
    <property type="project" value="UniProtKB"/>
</dbReference>
<dbReference type="GO" id="GO:0005576">
    <property type="term" value="C:extracellular region"/>
    <property type="evidence" value="ECO:0000304"/>
    <property type="project" value="Reactome"/>
</dbReference>
<dbReference type="GO" id="GO:0005615">
    <property type="term" value="C:extracellular space"/>
    <property type="evidence" value="ECO:0000314"/>
    <property type="project" value="BHF-UCL"/>
</dbReference>
<dbReference type="GO" id="GO:0005796">
    <property type="term" value="C:Golgi lumen"/>
    <property type="evidence" value="ECO:0000304"/>
    <property type="project" value="Reactome"/>
</dbReference>
<dbReference type="GO" id="GO:0043025">
    <property type="term" value="C:neuronal cell body"/>
    <property type="evidence" value="ECO:0007669"/>
    <property type="project" value="Ensembl"/>
</dbReference>
<dbReference type="GO" id="GO:0005634">
    <property type="term" value="C:nucleus"/>
    <property type="evidence" value="ECO:0000314"/>
    <property type="project" value="BHF-UCL"/>
</dbReference>
<dbReference type="GO" id="GO:0005886">
    <property type="term" value="C:plasma membrane"/>
    <property type="evidence" value="ECO:0000304"/>
    <property type="project" value="Reactome"/>
</dbReference>
<dbReference type="GO" id="GO:0031093">
    <property type="term" value="C:platelet alpha granule lumen"/>
    <property type="evidence" value="ECO:0000304"/>
    <property type="project" value="Reactome"/>
</dbReference>
<dbReference type="GO" id="GO:0005125">
    <property type="term" value="F:cytokine activity"/>
    <property type="evidence" value="ECO:0000314"/>
    <property type="project" value="BHF-UCL"/>
</dbReference>
<dbReference type="GO" id="GO:0035800">
    <property type="term" value="F:deubiquitinase activator activity"/>
    <property type="evidence" value="ECO:0000314"/>
    <property type="project" value="UniProt"/>
</dbReference>
<dbReference type="GO" id="GO:0019899">
    <property type="term" value="F:enzyme binding"/>
    <property type="evidence" value="ECO:0000353"/>
    <property type="project" value="BHF-UCL"/>
</dbReference>
<dbReference type="GO" id="GO:0008083">
    <property type="term" value="F:growth factor activity"/>
    <property type="evidence" value="ECO:0000315"/>
    <property type="project" value="BHF-UCL"/>
</dbReference>
<dbReference type="GO" id="GO:0042802">
    <property type="term" value="F:identical protein binding"/>
    <property type="evidence" value="ECO:0000353"/>
    <property type="project" value="IntAct"/>
</dbReference>
<dbReference type="GO" id="GO:0043539">
    <property type="term" value="F:protein serine/threonine kinase activator activity"/>
    <property type="evidence" value="ECO:0000314"/>
    <property type="project" value="UniProt"/>
</dbReference>
<dbReference type="GO" id="GO:0044877">
    <property type="term" value="F:protein-containing complex binding"/>
    <property type="evidence" value="ECO:0007669"/>
    <property type="project" value="Ensembl"/>
</dbReference>
<dbReference type="GO" id="GO:0034713">
    <property type="term" value="F:type I transforming growth factor beta receptor binding"/>
    <property type="evidence" value="ECO:0000315"/>
    <property type="project" value="AgBase"/>
</dbReference>
<dbReference type="GO" id="GO:0005114">
    <property type="term" value="F:type II transforming growth factor beta receptor binding"/>
    <property type="evidence" value="ECO:0000314"/>
    <property type="project" value="BHF-UCL"/>
</dbReference>
<dbReference type="GO" id="GO:0034714">
    <property type="term" value="F:type III transforming growth factor beta receptor binding"/>
    <property type="evidence" value="ECO:0000315"/>
    <property type="project" value="AgBase"/>
</dbReference>
<dbReference type="GO" id="GO:0002460">
    <property type="term" value="P:adaptive immune response based on somatic recombination of immune receptors built from immunoglobulin superfamily domains"/>
    <property type="evidence" value="ECO:0007669"/>
    <property type="project" value="Ensembl"/>
</dbReference>
<dbReference type="GO" id="GO:0003180">
    <property type="term" value="P:aortic valve morphogenesis"/>
    <property type="evidence" value="ECO:0000315"/>
    <property type="project" value="BHF-UCL"/>
</dbReference>
<dbReference type="GO" id="GO:0006754">
    <property type="term" value="P:ATP biosynthetic process"/>
    <property type="evidence" value="ECO:0000314"/>
    <property type="project" value="BHF-UCL"/>
</dbReference>
<dbReference type="GO" id="GO:0060751">
    <property type="term" value="P:branch elongation involved in mammary gland duct branching"/>
    <property type="evidence" value="ECO:0007669"/>
    <property type="project" value="Ensembl"/>
</dbReference>
<dbReference type="GO" id="GO:0060435">
    <property type="term" value="P:bronchiole development"/>
    <property type="evidence" value="ECO:0007669"/>
    <property type="project" value="Ensembl"/>
</dbReference>
<dbReference type="GO" id="GO:0060070">
    <property type="term" value="P:canonical Wnt signaling pathway"/>
    <property type="evidence" value="ECO:0007669"/>
    <property type="project" value="Ensembl"/>
</dbReference>
<dbReference type="GO" id="GO:0000902">
    <property type="term" value="P:cell morphogenesis"/>
    <property type="evidence" value="ECO:0007669"/>
    <property type="project" value="Ensembl"/>
</dbReference>
<dbReference type="GO" id="GO:0045216">
    <property type="term" value="P:cell-cell junction organization"/>
    <property type="evidence" value="ECO:0000314"/>
    <property type="project" value="BHF-UCL"/>
</dbReference>
<dbReference type="GO" id="GO:1905641">
    <property type="term" value="P:cellular response to acetaldehyde"/>
    <property type="evidence" value="ECO:0007669"/>
    <property type="project" value="Ensembl"/>
</dbReference>
<dbReference type="GO" id="GO:0071549">
    <property type="term" value="P:cellular response to dexamethasone stimulus"/>
    <property type="evidence" value="ECO:0007669"/>
    <property type="project" value="Ensembl"/>
</dbReference>
<dbReference type="GO" id="GO:0071333">
    <property type="term" value="P:cellular response to glucose stimulus"/>
    <property type="evidence" value="ECO:0007669"/>
    <property type="project" value="Ensembl"/>
</dbReference>
<dbReference type="GO" id="GO:0071456">
    <property type="term" value="P:cellular response to hypoxia"/>
    <property type="evidence" value="ECO:0000315"/>
    <property type="project" value="BHF-UCL"/>
</dbReference>
<dbReference type="GO" id="GO:1990314">
    <property type="term" value="P:cellular response to insulin-like growth factor stimulus"/>
    <property type="evidence" value="ECO:0007669"/>
    <property type="project" value="Ensembl"/>
</dbReference>
<dbReference type="GO" id="GO:0071479">
    <property type="term" value="P:cellular response to ionizing radiation"/>
    <property type="evidence" value="ECO:0007669"/>
    <property type="project" value="Ensembl"/>
</dbReference>
<dbReference type="GO" id="GO:0071404">
    <property type="term" value="P:cellular response to low-density lipoprotein particle stimulus"/>
    <property type="evidence" value="ECO:0000315"/>
    <property type="project" value="BHF-UCL"/>
</dbReference>
<dbReference type="GO" id="GO:0071260">
    <property type="term" value="P:cellular response to mechanical stimulus"/>
    <property type="evidence" value="ECO:0007669"/>
    <property type="project" value="Ensembl"/>
</dbReference>
<dbReference type="GO" id="GO:0071560">
    <property type="term" value="P:cellular response to transforming growth factor beta stimulus"/>
    <property type="evidence" value="ECO:0000314"/>
    <property type="project" value="BHF-UCL"/>
</dbReference>
<dbReference type="GO" id="GO:0098586">
    <property type="term" value="P:cellular response to virus"/>
    <property type="evidence" value="ECO:0007669"/>
    <property type="project" value="Ensembl"/>
</dbReference>
<dbReference type="GO" id="GO:0002062">
    <property type="term" value="P:chondrocyte differentiation"/>
    <property type="evidence" value="ECO:0000314"/>
    <property type="project" value="UniProtKB"/>
</dbReference>
<dbReference type="GO" id="GO:0002069">
    <property type="term" value="P:columnar/cuboidal epithelial cell maturation"/>
    <property type="evidence" value="ECO:0007669"/>
    <property type="project" value="Ensembl"/>
</dbReference>
<dbReference type="GO" id="GO:0002248">
    <property type="term" value="P:connective tissue replacement involved in inflammatory response wound healing"/>
    <property type="evidence" value="ECO:0000304"/>
    <property type="project" value="BHF-UCL"/>
</dbReference>
<dbReference type="GO" id="GO:0050832">
    <property type="term" value="P:defense response to fungus"/>
    <property type="evidence" value="ECO:0007669"/>
    <property type="project" value="Ensembl"/>
</dbReference>
<dbReference type="GO" id="GO:0048565">
    <property type="term" value="P:digestive tract development"/>
    <property type="evidence" value="ECO:0007669"/>
    <property type="project" value="Ensembl"/>
</dbReference>
<dbReference type="GO" id="GO:1990402">
    <property type="term" value="P:embryonic liver development"/>
    <property type="evidence" value="ECO:0000250"/>
    <property type="project" value="BHF-UCL"/>
</dbReference>
<dbReference type="GO" id="GO:0007492">
    <property type="term" value="P:endoderm development"/>
    <property type="evidence" value="ECO:0007669"/>
    <property type="project" value="Ensembl"/>
</dbReference>
<dbReference type="GO" id="GO:0050673">
    <property type="term" value="P:epithelial cell proliferation"/>
    <property type="evidence" value="ECO:0007669"/>
    <property type="project" value="Ensembl"/>
</dbReference>
<dbReference type="GO" id="GO:0001837">
    <property type="term" value="P:epithelial to mesenchymal transition"/>
    <property type="evidence" value="ECO:0000314"/>
    <property type="project" value="UniProtKB"/>
</dbReference>
<dbReference type="GO" id="GO:0085029">
    <property type="term" value="P:extracellular matrix assembly"/>
    <property type="evidence" value="ECO:0000314"/>
    <property type="project" value="BHF-UCL"/>
</dbReference>
<dbReference type="GO" id="GO:0097191">
    <property type="term" value="P:extrinsic apoptotic signaling pathway"/>
    <property type="evidence" value="ECO:0000314"/>
    <property type="project" value="BHF-UCL"/>
</dbReference>
<dbReference type="GO" id="GO:0060325">
    <property type="term" value="P:face morphogenesis"/>
    <property type="evidence" value="ECO:0007669"/>
    <property type="project" value="Ensembl"/>
</dbReference>
<dbReference type="GO" id="GO:0007565">
    <property type="term" value="P:female pregnancy"/>
    <property type="evidence" value="ECO:0007669"/>
    <property type="project" value="Ensembl"/>
</dbReference>
<dbReference type="GO" id="GO:0060364">
    <property type="term" value="P:frontal suture morphogenesis"/>
    <property type="evidence" value="ECO:0007669"/>
    <property type="project" value="Ensembl"/>
</dbReference>
<dbReference type="GO" id="GO:0010467">
    <property type="term" value="P:gene expression"/>
    <property type="evidence" value="ECO:0007669"/>
    <property type="project" value="Ensembl"/>
</dbReference>
<dbReference type="GO" id="GO:0008354">
    <property type="term" value="P:germ cell migration"/>
    <property type="evidence" value="ECO:0007669"/>
    <property type="project" value="Ensembl"/>
</dbReference>
<dbReference type="GO" id="GO:0007507">
    <property type="term" value="P:heart development"/>
    <property type="evidence" value="ECO:0000250"/>
    <property type="project" value="BHF-UCL"/>
</dbReference>
<dbReference type="GO" id="GO:0003179">
    <property type="term" value="P:heart valve morphogenesis"/>
    <property type="evidence" value="ECO:0000250"/>
    <property type="project" value="BHF-UCL"/>
</dbReference>
<dbReference type="GO" id="GO:0002244">
    <property type="term" value="P:hematopoietic progenitor cell differentiation"/>
    <property type="evidence" value="ECO:0000314"/>
    <property type="project" value="UniProtKB"/>
</dbReference>
<dbReference type="GO" id="GO:0030214">
    <property type="term" value="P:hyaluronan catabolic process"/>
    <property type="evidence" value="ECO:0000314"/>
    <property type="project" value="UniProtKB"/>
</dbReference>
<dbReference type="GO" id="GO:0048839">
    <property type="term" value="P:inner ear development"/>
    <property type="evidence" value="ECO:0007669"/>
    <property type="project" value="Ensembl"/>
</dbReference>
<dbReference type="GO" id="GO:0006874">
    <property type="term" value="P:intracellular calcium ion homeostasis"/>
    <property type="evidence" value="ECO:0007669"/>
    <property type="project" value="Ensembl"/>
</dbReference>
<dbReference type="GO" id="GO:0061520">
    <property type="term" value="P:Langerhans cell differentiation"/>
    <property type="evidence" value="ECO:0007669"/>
    <property type="project" value="Ensembl"/>
</dbReference>
<dbReference type="GO" id="GO:0070306">
    <property type="term" value="P:lens fiber cell differentiation"/>
    <property type="evidence" value="ECO:0007669"/>
    <property type="project" value="Ensembl"/>
</dbReference>
<dbReference type="GO" id="GO:0097421">
    <property type="term" value="P:liver regeneration"/>
    <property type="evidence" value="ECO:0007669"/>
    <property type="project" value="Ensembl"/>
</dbReference>
<dbReference type="GO" id="GO:0048286">
    <property type="term" value="P:lung alveolus development"/>
    <property type="evidence" value="ECO:0007669"/>
    <property type="project" value="Ensembl"/>
</dbReference>
<dbReference type="GO" id="GO:0048535">
    <property type="term" value="P:lymph node development"/>
    <property type="evidence" value="ECO:0000250"/>
    <property type="project" value="UniProtKB"/>
</dbReference>
<dbReference type="GO" id="GO:0010742">
    <property type="term" value="P:macrophage derived foam cell differentiation"/>
    <property type="evidence" value="ECO:0000305"/>
    <property type="project" value="BHF-UCL"/>
</dbReference>
<dbReference type="GO" id="GO:0060744">
    <property type="term" value="P:mammary gland branching involved in thelarche"/>
    <property type="evidence" value="ECO:0007669"/>
    <property type="project" value="Ensembl"/>
</dbReference>
<dbReference type="GO" id="GO:0031293">
    <property type="term" value="P:membrane protein intracellular domain proteolysis"/>
    <property type="evidence" value="ECO:0000314"/>
    <property type="project" value="UniProtKB"/>
</dbReference>
<dbReference type="GO" id="GO:0046716">
    <property type="term" value="P:muscle cell cellular homeostasis"/>
    <property type="evidence" value="ECO:0007669"/>
    <property type="project" value="Ensembl"/>
</dbReference>
<dbReference type="GO" id="GO:0042552">
    <property type="term" value="P:myelination"/>
    <property type="evidence" value="ECO:0007669"/>
    <property type="project" value="Ensembl"/>
</dbReference>
<dbReference type="GO" id="GO:0036446">
    <property type="term" value="P:myofibroblast differentiation"/>
    <property type="evidence" value="ECO:0000303"/>
    <property type="project" value="BHF-UCL"/>
</dbReference>
<dbReference type="GO" id="GO:0070168">
    <property type="term" value="P:negative regulation of biomineral tissue development"/>
    <property type="evidence" value="ECO:0000314"/>
    <property type="project" value="BHF-UCL"/>
</dbReference>
<dbReference type="GO" id="GO:0043537">
    <property type="term" value="P:negative regulation of blood vessel endothelial cell migration"/>
    <property type="evidence" value="ECO:0000314"/>
    <property type="project" value="BHF-UCL"/>
</dbReference>
<dbReference type="GO" id="GO:0045786">
    <property type="term" value="P:negative regulation of cell cycle"/>
    <property type="evidence" value="ECO:0000314"/>
    <property type="project" value="HGNC-UCL"/>
</dbReference>
<dbReference type="GO" id="GO:0045596">
    <property type="term" value="P:negative regulation of cell differentiation"/>
    <property type="evidence" value="ECO:0000270"/>
    <property type="project" value="CACAO"/>
</dbReference>
<dbReference type="GO" id="GO:0030308">
    <property type="term" value="P:negative regulation of cell growth"/>
    <property type="evidence" value="ECO:0000314"/>
    <property type="project" value="BHF-UCL"/>
</dbReference>
<dbReference type="GO" id="GO:0008285">
    <property type="term" value="P:negative regulation of cell population proliferation"/>
    <property type="evidence" value="ECO:0000314"/>
    <property type="project" value="BHF-UCL"/>
</dbReference>
<dbReference type="GO" id="GO:2000048">
    <property type="term" value="P:negative regulation of cell-cell adhesion mediated by cadherin"/>
    <property type="evidence" value="ECO:0000314"/>
    <property type="project" value="BHF-UCL"/>
</dbReference>
<dbReference type="GO" id="GO:0045892">
    <property type="term" value="P:negative regulation of DNA-templated transcription"/>
    <property type="evidence" value="ECO:0000314"/>
    <property type="project" value="UniProtKB"/>
</dbReference>
<dbReference type="GO" id="GO:0050680">
    <property type="term" value="P:negative regulation of epithelial cell proliferation"/>
    <property type="evidence" value="ECO:0000314"/>
    <property type="project" value="BHF-UCL"/>
</dbReference>
<dbReference type="GO" id="GO:0010716">
    <property type="term" value="P:negative regulation of extracellular matrix disassembly"/>
    <property type="evidence" value="ECO:0000304"/>
    <property type="project" value="BHF-UCL"/>
</dbReference>
<dbReference type="GO" id="GO:0045599">
    <property type="term" value="P:negative regulation of fat cell differentiation"/>
    <property type="evidence" value="ECO:0000314"/>
    <property type="project" value="UniProtKB"/>
</dbReference>
<dbReference type="GO" id="GO:0010629">
    <property type="term" value="P:negative regulation of gene expression"/>
    <property type="evidence" value="ECO:0000314"/>
    <property type="project" value="BHF-UCL"/>
</dbReference>
<dbReference type="GO" id="GO:1900126">
    <property type="term" value="P:negative regulation of hyaluronan biosynthetic process"/>
    <property type="evidence" value="ECO:0000314"/>
    <property type="project" value="UniProtKB"/>
</dbReference>
<dbReference type="GO" id="GO:0032700">
    <property type="term" value="P:negative regulation of interleukin-17 production"/>
    <property type="evidence" value="ECO:0007669"/>
    <property type="project" value="Ensembl"/>
</dbReference>
<dbReference type="GO" id="GO:0010936">
    <property type="term" value="P:negative regulation of macrophage cytokine production"/>
    <property type="evidence" value="ECO:0000314"/>
    <property type="project" value="DFLAT"/>
</dbReference>
<dbReference type="GO" id="GO:1902894">
    <property type="term" value="P:negative regulation of miRNA transcription"/>
    <property type="evidence" value="ECO:0000315"/>
    <property type="project" value="ARUK-UCL"/>
</dbReference>
<dbReference type="GO" id="GO:0045662">
    <property type="term" value="P:negative regulation of myoblast differentiation"/>
    <property type="evidence" value="ECO:0000314"/>
    <property type="project" value="UniProtKB"/>
</dbReference>
<dbReference type="GO" id="GO:0002859">
    <property type="term" value="P:negative regulation of natural killer cell mediated cytotoxicity directed against tumor cell target"/>
    <property type="evidence" value="ECO:0000314"/>
    <property type="project" value="ARUK-UCL"/>
</dbReference>
<dbReference type="GO" id="GO:0007406">
    <property type="term" value="P:negative regulation of neuroblast proliferation"/>
    <property type="evidence" value="ECO:0007669"/>
    <property type="project" value="Ensembl"/>
</dbReference>
<dbReference type="GO" id="GO:0030279">
    <property type="term" value="P:negative regulation of ossification"/>
    <property type="evidence" value="ECO:0007669"/>
    <property type="project" value="Ensembl"/>
</dbReference>
<dbReference type="GO" id="GO:0050765">
    <property type="term" value="P:negative regulation of phagocytosis"/>
    <property type="evidence" value="ECO:0007669"/>
    <property type="project" value="Ensembl"/>
</dbReference>
<dbReference type="GO" id="GO:1903077">
    <property type="term" value="P:negative regulation of protein localization to plasma membrane"/>
    <property type="evidence" value="ECO:0000314"/>
    <property type="project" value="UniProtKB"/>
</dbReference>
<dbReference type="GO" id="GO:0051280">
    <property type="term" value="P:negative regulation of release of sequestered calcium ion into cytosol"/>
    <property type="evidence" value="ECO:0007669"/>
    <property type="project" value="Ensembl"/>
</dbReference>
<dbReference type="GO" id="GO:0048642">
    <property type="term" value="P:negative regulation of skeletal muscle tissue development"/>
    <property type="evidence" value="ECO:0000314"/>
    <property type="project" value="UniProtKB"/>
</dbReference>
<dbReference type="GO" id="GO:0042130">
    <property type="term" value="P:negative regulation of T cell proliferation"/>
    <property type="evidence" value="ECO:0007669"/>
    <property type="project" value="Ensembl"/>
</dbReference>
<dbReference type="GO" id="GO:0000122">
    <property type="term" value="P:negative regulation of transcription by RNA polymerase II"/>
    <property type="evidence" value="ECO:0007669"/>
    <property type="project" value="Ensembl"/>
</dbReference>
<dbReference type="GO" id="GO:0001843">
    <property type="term" value="P:neural tube closure"/>
    <property type="evidence" value="ECO:0000250"/>
    <property type="project" value="BHF-UCL"/>
</dbReference>
<dbReference type="GO" id="GO:0021915">
    <property type="term" value="P:neural tube development"/>
    <property type="evidence" value="ECO:0000250"/>
    <property type="project" value="BHF-UCL"/>
</dbReference>
<dbReference type="GO" id="GO:0051402">
    <property type="term" value="P:neuron apoptotic process"/>
    <property type="evidence" value="ECO:0007669"/>
    <property type="project" value="Ensembl"/>
</dbReference>
<dbReference type="GO" id="GO:0007219">
    <property type="term" value="P:Notch signaling pathway"/>
    <property type="evidence" value="ECO:0007669"/>
    <property type="project" value="Ensembl"/>
</dbReference>
<dbReference type="GO" id="GO:0071895">
    <property type="term" value="P:odontoblast differentiation"/>
    <property type="evidence" value="ECO:0000250"/>
    <property type="project" value="UniProtKB"/>
</dbReference>
<dbReference type="GO" id="GO:0042475">
    <property type="term" value="P:odontogenesis of dentin-containing tooth"/>
    <property type="evidence" value="ECO:0007669"/>
    <property type="project" value="Ensembl"/>
</dbReference>
<dbReference type="GO" id="GO:0014003">
    <property type="term" value="P:oligodendrocyte development"/>
    <property type="evidence" value="ECO:0007669"/>
    <property type="project" value="Ensembl"/>
</dbReference>
<dbReference type="GO" id="GO:0030316">
    <property type="term" value="P:osteoclast differentiation"/>
    <property type="evidence" value="ECO:0007669"/>
    <property type="project" value="Ensembl"/>
</dbReference>
<dbReference type="GO" id="GO:0006796">
    <property type="term" value="P:phosphate-containing compound metabolic process"/>
    <property type="evidence" value="ECO:0000314"/>
    <property type="project" value="BHF-UCL"/>
</dbReference>
<dbReference type="GO" id="GO:0055091">
    <property type="term" value="P:phospholipid homeostasis"/>
    <property type="evidence" value="ECO:0007669"/>
    <property type="project" value="Ensembl"/>
</dbReference>
<dbReference type="GO" id="GO:0043536">
    <property type="term" value="P:positive regulation of blood vessel endothelial cell migration"/>
    <property type="evidence" value="ECO:0000314"/>
    <property type="project" value="BHF-UCL"/>
</dbReference>
<dbReference type="GO" id="GO:0090190">
    <property type="term" value="P:positive regulation of branching involved in ureteric bud morphogenesis"/>
    <property type="evidence" value="ECO:0007669"/>
    <property type="project" value="Ensembl"/>
</dbReference>
<dbReference type="GO" id="GO:0043123">
    <property type="term" value="P:positive regulation of canonical NF-kappaB signal transduction"/>
    <property type="evidence" value="ECO:0000315"/>
    <property type="project" value="BHF-UCL"/>
</dbReference>
<dbReference type="GO" id="GO:0090263">
    <property type="term" value="P:positive regulation of canonical Wnt signaling pathway"/>
    <property type="evidence" value="ECO:0000314"/>
    <property type="project" value="CACAO"/>
</dbReference>
<dbReference type="GO" id="GO:2000727">
    <property type="term" value="P:positive regulation of cardiac muscle cell differentiation"/>
    <property type="evidence" value="ECO:0000314"/>
    <property type="project" value="BHF-UCL"/>
</dbReference>
<dbReference type="GO" id="GO:0051781">
    <property type="term" value="P:positive regulation of cell division"/>
    <property type="evidence" value="ECO:0007669"/>
    <property type="project" value="UniProtKB-KW"/>
</dbReference>
<dbReference type="GO" id="GO:0030335">
    <property type="term" value="P:positive regulation of cell migration"/>
    <property type="evidence" value="ECO:0000314"/>
    <property type="project" value="BHF-UCL"/>
</dbReference>
<dbReference type="GO" id="GO:0008284">
    <property type="term" value="P:positive regulation of cell population proliferation"/>
    <property type="evidence" value="ECO:0000314"/>
    <property type="project" value="BHF-UCL"/>
</dbReference>
<dbReference type="GO" id="GO:2000343">
    <property type="term" value="P:positive regulation of chemokine (C-X-C motif) ligand 2 production"/>
    <property type="evidence" value="ECO:0000315"/>
    <property type="project" value="BHF-UCL"/>
</dbReference>
<dbReference type="GO" id="GO:0050921">
    <property type="term" value="P:positive regulation of chemotaxis"/>
    <property type="evidence" value="ECO:0000314"/>
    <property type="project" value="BHF-UCL"/>
</dbReference>
<dbReference type="GO" id="GO:0032967">
    <property type="term" value="P:positive regulation of collagen biosynthetic process"/>
    <property type="evidence" value="ECO:0000314"/>
    <property type="project" value="UniProtKB"/>
</dbReference>
<dbReference type="GO" id="GO:0045893">
    <property type="term" value="P:positive regulation of DNA-templated transcription"/>
    <property type="evidence" value="ECO:0000314"/>
    <property type="project" value="HGNC-UCL"/>
</dbReference>
<dbReference type="GO" id="GO:2000353">
    <property type="term" value="P:positive regulation of endothelial cell apoptotic process"/>
    <property type="evidence" value="ECO:0000315"/>
    <property type="project" value="BHF-UCL"/>
</dbReference>
<dbReference type="GO" id="GO:0045742">
    <property type="term" value="P:positive regulation of epidermal growth factor receptor signaling pathway"/>
    <property type="evidence" value="ECO:0000314"/>
    <property type="project" value="BHF-UCL"/>
</dbReference>
<dbReference type="GO" id="GO:0050679">
    <property type="term" value="P:positive regulation of epithelial cell proliferation"/>
    <property type="evidence" value="ECO:0007669"/>
    <property type="project" value="Ensembl"/>
</dbReference>
<dbReference type="GO" id="GO:0010718">
    <property type="term" value="P:positive regulation of epithelial to mesenchymal transition"/>
    <property type="evidence" value="ECO:0000314"/>
    <property type="project" value="BHF-UCL"/>
</dbReference>
<dbReference type="GO" id="GO:0070374">
    <property type="term" value="P:positive regulation of ERK1 and ERK2 cascade"/>
    <property type="evidence" value="ECO:0000314"/>
    <property type="project" value="UniProtKB"/>
</dbReference>
<dbReference type="GO" id="GO:0031536">
    <property type="term" value="P:positive regulation of exit from mitosis"/>
    <property type="evidence" value="ECO:0007669"/>
    <property type="project" value="Ensembl"/>
</dbReference>
<dbReference type="GO" id="GO:1901203">
    <property type="term" value="P:positive regulation of extracellular matrix assembly"/>
    <property type="evidence" value="ECO:0000250"/>
    <property type="project" value="BHF-UCL"/>
</dbReference>
<dbReference type="GO" id="GO:0010763">
    <property type="term" value="P:positive regulation of fibroblast migration"/>
    <property type="evidence" value="ECO:0000314"/>
    <property type="project" value="BHF-UCL"/>
</dbReference>
<dbReference type="GO" id="GO:0048146">
    <property type="term" value="P:positive regulation of fibroblast proliferation"/>
    <property type="evidence" value="ECO:0007669"/>
    <property type="project" value="Ensembl"/>
</dbReference>
<dbReference type="GO" id="GO:0010628">
    <property type="term" value="P:positive regulation of gene expression"/>
    <property type="evidence" value="ECO:0000314"/>
    <property type="project" value="UniProtKB"/>
</dbReference>
<dbReference type="GO" id="GO:0050729">
    <property type="term" value="P:positive regulation of inflammatory response"/>
    <property type="evidence" value="ECO:0000315"/>
    <property type="project" value="BHF-UCL"/>
</dbReference>
<dbReference type="GO" id="GO:0032740">
    <property type="term" value="P:positive regulation of interleukin-17 production"/>
    <property type="evidence" value="ECO:0000314"/>
    <property type="project" value="BHF-UCL"/>
</dbReference>
<dbReference type="GO" id="GO:0032755">
    <property type="term" value="P:positive regulation of interleukin-6 production"/>
    <property type="evidence" value="ECO:0000315"/>
    <property type="project" value="BHF-UCL"/>
</dbReference>
<dbReference type="GO" id="GO:0048298">
    <property type="term" value="P:positive regulation of isotype switching to IgA isotypes"/>
    <property type="evidence" value="ECO:0000314"/>
    <property type="project" value="MGI"/>
</dbReference>
<dbReference type="GO" id="GO:0043410">
    <property type="term" value="P:positive regulation of MAPK cascade"/>
    <property type="evidence" value="ECO:0000314"/>
    <property type="project" value="BHF-UCL"/>
</dbReference>
<dbReference type="GO" id="GO:1902462">
    <property type="term" value="P:positive regulation of mesenchymal stem cell proliferation"/>
    <property type="evidence" value="ECO:0000316"/>
    <property type="project" value="BHF-UCL"/>
</dbReference>
<dbReference type="GO" id="GO:0014008">
    <property type="term" value="P:positive regulation of microglia differentiation"/>
    <property type="evidence" value="ECO:0000250"/>
    <property type="project" value="UniProtKB"/>
</dbReference>
<dbReference type="GO" id="GO:1902895">
    <property type="term" value="P:positive regulation of miRNA transcription"/>
    <property type="evidence" value="ECO:0000314"/>
    <property type="project" value="BHF-UCL"/>
</dbReference>
<dbReference type="GO" id="GO:0071677">
    <property type="term" value="P:positive regulation of mononuclear cell migration"/>
    <property type="evidence" value="ECO:0007669"/>
    <property type="project" value="Ensembl"/>
</dbReference>
<dbReference type="GO" id="GO:0042482">
    <property type="term" value="P:positive regulation of odontogenesis"/>
    <property type="evidence" value="ECO:0007669"/>
    <property type="project" value="Ensembl"/>
</dbReference>
<dbReference type="GO" id="GO:0050731">
    <property type="term" value="P:positive regulation of peptidyl-tyrosine phosphorylation"/>
    <property type="evidence" value="ECO:0000314"/>
    <property type="project" value="UniProtKB"/>
</dbReference>
<dbReference type="GO" id="GO:0051897">
    <property type="term" value="P:positive regulation of phosphatidylinositol 3-kinase/protein kinase B signal transduction"/>
    <property type="evidence" value="ECO:0000314"/>
    <property type="project" value="BHF-UCL"/>
</dbReference>
<dbReference type="GO" id="GO:2000636">
    <property type="term" value="P:positive regulation of primary miRNA processing"/>
    <property type="evidence" value="ECO:0000314"/>
    <property type="project" value="BHF-UCL"/>
</dbReference>
<dbReference type="GO" id="GO:0042307">
    <property type="term" value="P:positive regulation of protein import into nucleus"/>
    <property type="evidence" value="ECO:0000314"/>
    <property type="project" value="BHF-UCL"/>
</dbReference>
<dbReference type="GO" id="GO:1900182">
    <property type="term" value="P:positive regulation of protein localization to nucleus"/>
    <property type="evidence" value="ECO:0000314"/>
    <property type="project" value="BHF-UCL"/>
</dbReference>
<dbReference type="GO" id="GO:0051247">
    <property type="term" value="P:positive regulation of protein metabolic process"/>
    <property type="evidence" value="ECO:0000314"/>
    <property type="project" value="BHF-UCL"/>
</dbReference>
<dbReference type="GO" id="GO:0050714">
    <property type="term" value="P:positive regulation of protein secretion"/>
    <property type="evidence" value="ECO:0000314"/>
    <property type="project" value="BHF-UCL"/>
</dbReference>
<dbReference type="GO" id="GO:0031334">
    <property type="term" value="P:positive regulation of protein-containing complex assembly"/>
    <property type="evidence" value="ECO:0000314"/>
    <property type="project" value="BHF-UCL"/>
</dbReference>
<dbReference type="GO" id="GO:1904894">
    <property type="term" value="P:positive regulation of receptor signaling pathway via STAT"/>
    <property type="evidence" value="ECO:0000314"/>
    <property type="project" value="ARUK-UCL"/>
</dbReference>
<dbReference type="GO" id="GO:0045591">
    <property type="term" value="P:positive regulation of regulatory T cell differentiation"/>
    <property type="evidence" value="ECO:0007669"/>
    <property type="project" value="Ensembl"/>
</dbReference>
<dbReference type="GO" id="GO:0060391">
    <property type="term" value="P:positive regulation of SMAD protein signal transduction"/>
    <property type="evidence" value="ECO:0000314"/>
    <property type="project" value="UniProtKB"/>
</dbReference>
<dbReference type="GO" id="GO:0051152">
    <property type="term" value="P:positive regulation of smooth muscle cell differentiation"/>
    <property type="evidence" value="ECO:0007669"/>
    <property type="project" value="Ensembl"/>
</dbReference>
<dbReference type="GO" id="GO:0048661">
    <property type="term" value="P:positive regulation of smooth muscle cell proliferation"/>
    <property type="evidence" value="ECO:0000314"/>
    <property type="project" value="ARUK-UCL"/>
</dbReference>
<dbReference type="GO" id="GO:0032930">
    <property type="term" value="P:positive regulation of superoxide anion generation"/>
    <property type="evidence" value="ECO:0000314"/>
    <property type="project" value="BHF-UCL"/>
</dbReference>
<dbReference type="GO" id="GO:0045944">
    <property type="term" value="P:positive regulation of transcription by RNA polymerase II"/>
    <property type="evidence" value="ECO:0000314"/>
    <property type="project" value="UniProtKB"/>
</dbReference>
<dbReference type="GO" id="GO:0032760">
    <property type="term" value="P:positive regulation of tumor necrosis factor production"/>
    <property type="evidence" value="ECO:0000315"/>
    <property type="project" value="BHF-UCL"/>
</dbReference>
<dbReference type="GO" id="GO:0010575">
    <property type="term" value="P:positive regulation of vascular endothelial growth factor production"/>
    <property type="evidence" value="ECO:0000304"/>
    <property type="project" value="BHF-UCL"/>
</dbReference>
<dbReference type="GO" id="GO:0043117">
    <property type="term" value="P:positive regulation of vascular permeability"/>
    <property type="evidence" value="ECO:0000314"/>
    <property type="project" value="UniProtKB"/>
</dbReference>
<dbReference type="GO" id="GO:1904018">
    <property type="term" value="P:positive regulation of vasculature development"/>
    <property type="evidence" value="ECO:0000314"/>
    <property type="project" value="BHF-UCL"/>
</dbReference>
<dbReference type="GO" id="GO:0006611">
    <property type="term" value="P:protein export from nucleus"/>
    <property type="evidence" value="ECO:0000314"/>
    <property type="project" value="BHF-UCL"/>
</dbReference>
<dbReference type="GO" id="GO:0032801">
    <property type="term" value="P:receptor catabolic process"/>
    <property type="evidence" value="ECO:0000314"/>
    <property type="project" value="BHF-UCL"/>
</dbReference>
<dbReference type="GO" id="GO:0032956">
    <property type="term" value="P:regulation of actin cytoskeleton organization"/>
    <property type="evidence" value="ECO:0007669"/>
    <property type="project" value="Ensembl"/>
</dbReference>
<dbReference type="GO" id="GO:0060312">
    <property type="term" value="P:regulation of blood vessel remodeling"/>
    <property type="evidence" value="ECO:0000304"/>
    <property type="project" value="BHF-UCL"/>
</dbReference>
<dbReference type="GO" id="GO:0060762">
    <property type="term" value="P:regulation of branching involved in mammary gland duct morphogenesis"/>
    <property type="evidence" value="ECO:0007669"/>
    <property type="project" value="Ensembl"/>
</dbReference>
<dbReference type="GO" id="GO:0061035">
    <property type="term" value="P:regulation of cartilage development"/>
    <property type="evidence" value="ECO:0007669"/>
    <property type="project" value="Ensembl"/>
</dbReference>
<dbReference type="GO" id="GO:0030334">
    <property type="term" value="P:regulation of cell migration"/>
    <property type="evidence" value="ECO:0000304"/>
    <property type="project" value="BHF-UCL"/>
</dbReference>
<dbReference type="GO" id="GO:0042127">
    <property type="term" value="P:regulation of cell population proliferation"/>
    <property type="evidence" value="ECO:0000318"/>
    <property type="project" value="GO_Central"/>
</dbReference>
<dbReference type="GO" id="GO:0070173">
    <property type="term" value="P:regulation of enamel mineralization"/>
    <property type="evidence" value="ECO:0007669"/>
    <property type="project" value="Ensembl"/>
</dbReference>
<dbReference type="GO" id="GO:0032667">
    <property type="term" value="P:regulation of interleukin-23 production"/>
    <property type="evidence" value="ECO:0007669"/>
    <property type="project" value="Ensembl"/>
</dbReference>
<dbReference type="GO" id="GO:0042306">
    <property type="term" value="P:regulation of protein import into nucleus"/>
    <property type="evidence" value="ECO:0000250"/>
    <property type="project" value="UniProtKB"/>
</dbReference>
<dbReference type="GO" id="GO:0002028">
    <property type="term" value="P:regulation of sodium ion transport"/>
    <property type="evidence" value="ECO:0007669"/>
    <property type="project" value="Ensembl"/>
</dbReference>
<dbReference type="GO" id="GO:0016202">
    <property type="term" value="P:regulation of striated muscle tissue development"/>
    <property type="evidence" value="ECO:0000250"/>
    <property type="project" value="UniProtKB"/>
</dbReference>
<dbReference type="GO" id="GO:0045066">
    <property type="term" value="P:regulatory T cell differentiation"/>
    <property type="evidence" value="ECO:0000314"/>
    <property type="project" value="UniProt"/>
</dbReference>
<dbReference type="GO" id="GO:0070723">
    <property type="term" value="P:response to cholesterol"/>
    <property type="evidence" value="ECO:0000314"/>
    <property type="project" value="BHF-UCL"/>
</dbReference>
<dbReference type="GO" id="GO:0032355">
    <property type="term" value="P:response to estradiol"/>
    <property type="evidence" value="ECO:0000314"/>
    <property type="project" value="BHF-UCL"/>
</dbReference>
<dbReference type="GO" id="GO:0045471">
    <property type="term" value="P:response to ethanol"/>
    <property type="evidence" value="ECO:0007669"/>
    <property type="project" value="Ensembl"/>
</dbReference>
<dbReference type="GO" id="GO:0035902">
    <property type="term" value="P:response to immobilization stress"/>
    <property type="evidence" value="ECO:0007669"/>
    <property type="project" value="Ensembl"/>
</dbReference>
<dbReference type="GO" id="GO:0034616">
    <property type="term" value="P:response to laminar fluid shear stress"/>
    <property type="evidence" value="ECO:0007669"/>
    <property type="project" value="Ensembl"/>
</dbReference>
<dbReference type="GO" id="GO:0032570">
    <property type="term" value="P:response to progesterone"/>
    <property type="evidence" value="ECO:0000314"/>
    <property type="project" value="BHF-UCL"/>
</dbReference>
<dbReference type="GO" id="GO:1902074">
    <property type="term" value="P:response to salt"/>
    <property type="evidence" value="ECO:0007669"/>
    <property type="project" value="Ensembl"/>
</dbReference>
<dbReference type="GO" id="GO:0033280">
    <property type="term" value="P:response to vitamin D"/>
    <property type="evidence" value="ECO:0007669"/>
    <property type="project" value="Ensembl"/>
</dbReference>
<dbReference type="GO" id="GO:0009611">
    <property type="term" value="P:response to wounding"/>
    <property type="evidence" value="ECO:0000270"/>
    <property type="project" value="BHF-UCL"/>
</dbReference>
<dbReference type="GO" id="GO:0009410">
    <property type="term" value="P:response to xenobiotic stimulus"/>
    <property type="evidence" value="ECO:0007669"/>
    <property type="project" value="Ensembl"/>
</dbReference>
<dbReference type="GO" id="GO:0061298">
    <property type="term" value="P:retina vasculature development in camera-type eye"/>
    <property type="evidence" value="ECO:0007669"/>
    <property type="project" value="Ensembl"/>
</dbReference>
<dbReference type="GO" id="GO:0007435">
    <property type="term" value="P:salivary gland morphogenesis"/>
    <property type="evidence" value="ECO:0000270"/>
    <property type="project" value="BHF-UCL"/>
</dbReference>
<dbReference type="GO" id="GO:0002040">
    <property type="term" value="P:sprouting angiogenesis"/>
    <property type="evidence" value="ECO:0000315"/>
    <property type="project" value="BHF-UCL"/>
</dbReference>
<dbReference type="GO" id="GO:0072089">
    <property type="term" value="P:stem cell proliferation"/>
    <property type="evidence" value="ECO:0007669"/>
    <property type="project" value="Ensembl"/>
</dbReference>
<dbReference type="GO" id="GO:0043129">
    <property type="term" value="P:surfactant homeostasis"/>
    <property type="evidence" value="ECO:0007669"/>
    <property type="project" value="Ensembl"/>
</dbReference>
<dbReference type="GO" id="GO:0043029">
    <property type="term" value="P:T cell homeostasis"/>
    <property type="evidence" value="ECO:0007669"/>
    <property type="project" value="Ensembl"/>
</dbReference>
<dbReference type="GO" id="GO:0042098">
    <property type="term" value="P:T cell proliferation"/>
    <property type="evidence" value="ECO:0007669"/>
    <property type="project" value="Ensembl"/>
</dbReference>
<dbReference type="GO" id="GO:0002513">
    <property type="term" value="P:tolerance induction to self antigen"/>
    <property type="evidence" value="ECO:0007669"/>
    <property type="project" value="Ensembl"/>
</dbReference>
<dbReference type="GO" id="GO:0007179">
    <property type="term" value="P:transforming growth factor beta receptor signaling pathway"/>
    <property type="evidence" value="ECO:0000314"/>
    <property type="project" value="BHF-UCL"/>
</dbReference>
<dbReference type="GO" id="GO:0001657">
    <property type="term" value="P:ureteric bud development"/>
    <property type="evidence" value="ECO:0007669"/>
    <property type="project" value="Ensembl"/>
</dbReference>
<dbReference type="GO" id="GO:0001570">
    <property type="term" value="P:vasculogenesis"/>
    <property type="evidence" value="ECO:0000250"/>
    <property type="project" value="BHF-UCL"/>
</dbReference>
<dbReference type="GO" id="GO:0055010">
    <property type="term" value="P:ventricular cardiac muscle tissue morphogenesis"/>
    <property type="evidence" value="ECO:0000250"/>
    <property type="project" value="BHF-UCL"/>
</dbReference>
<dbReference type="CDD" id="cd19384">
    <property type="entry name" value="TGF_beta_TGFB1"/>
    <property type="match status" value="1"/>
</dbReference>
<dbReference type="DisProt" id="DP01252"/>
<dbReference type="FunFam" id="2.10.90.10:FF:000004">
    <property type="entry name" value="Transforming growth factor beta"/>
    <property type="match status" value="1"/>
</dbReference>
<dbReference type="FunFam" id="2.60.120.970:FF:000010">
    <property type="entry name" value="Transforming growth factor beta"/>
    <property type="match status" value="1"/>
</dbReference>
<dbReference type="Gene3D" id="2.60.120.970">
    <property type="match status" value="1"/>
</dbReference>
<dbReference type="Gene3D" id="2.10.90.10">
    <property type="entry name" value="Cystine-knot cytokines"/>
    <property type="match status" value="1"/>
</dbReference>
<dbReference type="IDEAL" id="IID00534"/>
<dbReference type="InterPro" id="IPR029034">
    <property type="entry name" value="Cystine-knot_cytokine"/>
</dbReference>
<dbReference type="InterPro" id="IPR001839">
    <property type="entry name" value="TGF-b_C"/>
</dbReference>
<dbReference type="InterPro" id="IPR001111">
    <property type="entry name" value="TGF-b_propeptide"/>
</dbReference>
<dbReference type="InterPro" id="IPR016319">
    <property type="entry name" value="TGF-beta"/>
</dbReference>
<dbReference type="InterPro" id="IPR015615">
    <property type="entry name" value="TGF-beta-rel"/>
</dbReference>
<dbReference type="InterPro" id="IPR003939">
    <property type="entry name" value="TGFb1"/>
</dbReference>
<dbReference type="InterPro" id="IPR017948">
    <property type="entry name" value="TGFb_CS"/>
</dbReference>
<dbReference type="PANTHER" id="PTHR11848">
    <property type="entry name" value="TGF-BETA FAMILY"/>
    <property type="match status" value="1"/>
</dbReference>
<dbReference type="PANTHER" id="PTHR11848:SF125">
    <property type="entry name" value="TRANSFORMING GROWTH FACTOR BETA-1 PROPROTEIN"/>
    <property type="match status" value="1"/>
</dbReference>
<dbReference type="Pfam" id="PF00019">
    <property type="entry name" value="TGF_beta"/>
    <property type="match status" value="1"/>
</dbReference>
<dbReference type="Pfam" id="PF00688">
    <property type="entry name" value="TGFb_propeptide"/>
    <property type="match status" value="1"/>
</dbReference>
<dbReference type="PIRSF" id="PIRSF001787">
    <property type="entry name" value="TGF-beta"/>
    <property type="match status" value="1"/>
</dbReference>
<dbReference type="PRINTS" id="PR01423">
    <property type="entry name" value="TGFBETA"/>
</dbReference>
<dbReference type="PRINTS" id="PR01424">
    <property type="entry name" value="TGFBETA1"/>
</dbReference>
<dbReference type="SMART" id="SM00204">
    <property type="entry name" value="TGFB"/>
    <property type="match status" value="1"/>
</dbReference>
<dbReference type="SUPFAM" id="SSF57501">
    <property type="entry name" value="Cystine-knot cytokines"/>
    <property type="match status" value="1"/>
</dbReference>
<dbReference type="PROSITE" id="PS00250">
    <property type="entry name" value="TGF_BETA_1"/>
    <property type="match status" value="1"/>
</dbReference>
<dbReference type="PROSITE" id="PS51362">
    <property type="entry name" value="TGF_BETA_2"/>
    <property type="match status" value="1"/>
</dbReference>
<protein>
    <recommendedName>
        <fullName>Transforming growth factor beta-1 proprotein</fullName>
    </recommendedName>
    <component>
        <recommendedName>
            <fullName evidence="42 44 45 46">Latency-associated peptide</fullName>
            <shortName>LAP</shortName>
        </recommendedName>
    </component>
    <component>
        <recommendedName>
            <fullName evidence="42 44 45 46">Transforming growth factor beta-1</fullName>
            <shortName>TGF-beta-1</shortName>
        </recommendedName>
    </component>
</protein>
<organism>
    <name type="scientific">Homo sapiens</name>
    <name type="common">Human</name>
    <dbReference type="NCBI Taxonomy" id="9606"/>
    <lineage>
        <taxon>Eukaryota</taxon>
        <taxon>Metazoa</taxon>
        <taxon>Chordata</taxon>
        <taxon>Craniata</taxon>
        <taxon>Vertebrata</taxon>
        <taxon>Euteleostomi</taxon>
        <taxon>Mammalia</taxon>
        <taxon>Eutheria</taxon>
        <taxon>Euarchontoglires</taxon>
        <taxon>Primates</taxon>
        <taxon>Haplorrhini</taxon>
        <taxon>Catarrhini</taxon>
        <taxon>Hominidae</taxon>
        <taxon>Homo</taxon>
    </lineage>
</organism>
<accession>P01137</accession>
<accession>A8K792</accession>
<accession>Q9UCG4</accession>
<gene>
    <name evidence="47" type="primary">TGFB1</name>
    <name type="synonym">TGFB</name>
</gene>
<proteinExistence type="evidence at protein level"/>
<name>TGFB1_HUMAN</name>
<evidence type="ECO:0000250" key="1">
    <source>
        <dbReference type="UniProtKB" id="P04202"/>
    </source>
</evidence>
<evidence type="ECO:0000250" key="2">
    <source>
        <dbReference type="UniProtKB" id="P07200"/>
    </source>
</evidence>
<evidence type="ECO:0000255" key="3"/>
<evidence type="ECO:0000269" key="4">
    <source>
    </source>
</evidence>
<evidence type="ECO:0000269" key="5">
    <source>
    </source>
</evidence>
<evidence type="ECO:0000269" key="6">
    <source>
    </source>
</evidence>
<evidence type="ECO:0000269" key="7">
    <source>
    </source>
</evidence>
<evidence type="ECO:0000269" key="8">
    <source>
    </source>
</evidence>
<evidence type="ECO:0000269" key="9">
    <source>
    </source>
</evidence>
<evidence type="ECO:0000269" key="10">
    <source>
    </source>
</evidence>
<evidence type="ECO:0000269" key="11">
    <source>
    </source>
</evidence>
<evidence type="ECO:0000269" key="12">
    <source>
    </source>
</evidence>
<evidence type="ECO:0000269" key="13">
    <source>
    </source>
</evidence>
<evidence type="ECO:0000269" key="14">
    <source>
    </source>
</evidence>
<evidence type="ECO:0000269" key="15">
    <source>
    </source>
</evidence>
<evidence type="ECO:0000269" key="16">
    <source>
    </source>
</evidence>
<evidence type="ECO:0000269" key="17">
    <source>
    </source>
</evidence>
<evidence type="ECO:0000269" key="18">
    <source>
    </source>
</evidence>
<evidence type="ECO:0000269" key="19">
    <source>
    </source>
</evidence>
<evidence type="ECO:0000269" key="20">
    <source>
    </source>
</evidence>
<evidence type="ECO:0000269" key="21">
    <source>
    </source>
</evidence>
<evidence type="ECO:0000269" key="22">
    <source>
    </source>
</evidence>
<evidence type="ECO:0000269" key="23">
    <source>
    </source>
</evidence>
<evidence type="ECO:0000269" key="24">
    <source>
    </source>
</evidence>
<evidence type="ECO:0000269" key="25">
    <source>
    </source>
</evidence>
<evidence type="ECO:0000269" key="26">
    <source>
    </source>
</evidence>
<evidence type="ECO:0000269" key="27">
    <source>
    </source>
</evidence>
<evidence type="ECO:0000269" key="28">
    <source>
    </source>
</evidence>
<evidence type="ECO:0000269" key="29">
    <source>
    </source>
</evidence>
<evidence type="ECO:0000269" key="30">
    <source>
    </source>
</evidence>
<evidence type="ECO:0000269" key="31">
    <source>
    </source>
</evidence>
<evidence type="ECO:0000269" key="32">
    <source>
    </source>
</evidence>
<evidence type="ECO:0000269" key="33">
    <source>
    </source>
</evidence>
<evidence type="ECO:0000269" key="34">
    <source>
    </source>
</evidence>
<evidence type="ECO:0000269" key="35">
    <source>
    </source>
</evidence>
<evidence type="ECO:0000269" key="36">
    <source>
    </source>
</evidence>
<evidence type="ECO:0000269" key="37">
    <source>
    </source>
</evidence>
<evidence type="ECO:0000269" key="38">
    <source>
    </source>
</evidence>
<evidence type="ECO:0000303" key="39">
    <source>
    </source>
</evidence>
<evidence type="ECO:0000305" key="40"/>
<evidence type="ECO:0000305" key="41">
    <source>
    </source>
</evidence>
<evidence type="ECO:0000305" key="42">
    <source>
    </source>
</evidence>
<evidence type="ECO:0000305" key="43">
    <source>
    </source>
</evidence>
<evidence type="ECO:0000305" key="44">
    <source>
    </source>
</evidence>
<evidence type="ECO:0000305" key="45">
    <source>
    </source>
</evidence>
<evidence type="ECO:0000305" key="46">
    <source>
    </source>
</evidence>
<evidence type="ECO:0000312" key="47">
    <source>
        <dbReference type="HGNC" id="HGNC:11766"/>
    </source>
</evidence>
<evidence type="ECO:0007744" key="48">
    <source>
        <dbReference type="PDB" id="3KFD"/>
    </source>
</evidence>
<evidence type="ECO:0007744" key="49">
    <source>
        <dbReference type="PDB" id="4KV5"/>
    </source>
</evidence>
<evidence type="ECO:0007744" key="50">
    <source>
        <dbReference type="PDB" id="5FFO"/>
    </source>
</evidence>
<evidence type="ECO:0007744" key="51">
    <source>
        <dbReference type="PDB" id="5VQP"/>
    </source>
</evidence>
<evidence type="ECO:0007829" key="52">
    <source>
        <dbReference type="PDB" id="1KLC"/>
    </source>
</evidence>
<evidence type="ECO:0007829" key="53">
    <source>
        <dbReference type="PDB" id="3KFD"/>
    </source>
</evidence>
<evidence type="ECO:0007829" key="54">
    <source>
        <dbReference type="PDB" id="5FFO"/>
    </source>
</evidence>
<evidence type="ECO:0007829" key="55">
    <source>
        <dbReference type="PDB" id="5VQP"/>
    </source>
</evidence>
<evidence type="ECO:0007829" key="56">
    <source>
        <dbReference type="PDB" id="6OM2"/>
    </source>
</evidence>
<evidence type="ECO:0007829" key="57">
    <source>
        <dbReference type="PDB" id="8UDZ"/>
    </source>
</evidence>
<evidence type="ECO:0007829" key="58">
    <source>
        <dbReference type="PDB" id="8VSC"/>
    </source>
</evidence>